<evidence type="ECO:0000250" key="1">
    <source>
        <dbReference type="UniProtKB" id="P62825"/>
    </source>
</evidence>
<evidence type="ECO:0000250" key="2">
    <source>
        <dbReference type="UniProtKB" id="P62827"/>
    </source>
</evidence>
<evidence type="ECO:0000255" key="3">
    <source>
        <dbReference type="PROSITE-ProRule" id="PRU00752"/>
    </source>
</evidence>
<evidence type="ECO:0000269" key="4">
    <source>
    </source>
</evidence>
<evidence type="ECO:0000269" key="5">
    <source>
    </source>
</evidence>
<evidence type="ECO:0000269" key="6">
    <source>
    </source>
</evidence>
<evidence type="ECO:0000269" key="7">
    <source>
    </source>
</evidence>
<evidence type="ECO:0000269" key="8">
    <source>
    </source>
</evidence>
<evidence type="ECO:0000269" key="9">
    <source>
    </source>
</evidence>
<evidence type="ECO:0000269" key="10">
    <source>
    </source>
</evidence>
<evidence type="ECO:0000269" key="11">
    <source>
    </source>
</evidence>
<evidence type="ECO:0000269" key="12">
    <source>
    </source>
</evidence>
<evidence type="ECO:0000269" key="13">
    <source>
    </source>
</evidence>
<evidence type="ECO:0000269" key="14">
    <source>
    </source>
</evidence>
<evidence type="ECO:0000269" key="15">
    <source>
    </source>
</evidence>
<evidence type="ECO:0000269" key="16">
    <source>
    </source>
</evidence>
<evidence type="ECO:0000269" key="17">
    <source>
    </source>
</evidence>
<evidence type="ECO:0000269" key="18">
    <source>
    </source>
</evidence>
<evidence type="ECO:0000269" key="19">
    <source>
    </source>
</evidence>
<evidence type="ECO:0000269" key="20">
    <source>
    </source>
</evidence>
<evidence type="ECO:0000269" key="21">
    <source>
    </source>
</evidence>
<evidence type="ECO:0000269" key="22">
    <source>
    </source>
</evidence>
<evidence type="ECO:0000269" key="23">
    <source>
    </source>
</evidence>
<evidence type="ECO:0000269" key="24">
    <source>
    </source>
</evidence>
<evidence type="ECO:0000269" key="25">
    <source>
    </source>
</evidence>
<evidence type="ECO:0000269" key="26">
    <source>
    </source>
</evidence>
<evidence type="ECO:0000269" key="27">
    <source>
    </source>
</evidence>
<evidence type="ECO:0000269" key="28">
    <source>
    </source>
</evidence>
<evidence type="ECO:0000269" key="29">
    <source>
    </source>
</evidence>
<evidence type="ECO:0000269" key="30">
    <source>
    </source>
</evidence>
<evidence type="ECO:0000269" key="31">
    <source>
    </source>
</evidence>
<evidence type="ECO:0000269" key="32">
    <source>
    </source>
</evidence>
<evidence type="ECO:0000269" key="33">
    <source>
    </source>
</evidence>
<evidence type="ECO:0000269" key="34">
    <source>
    </source>
</evidence>
<evidence type="ECO:0000269" key="35">
    <source>
    </source>
</evidence>
<evidence type="ECO:0000269" key="36">
    <source>
    </source>
</evidence>
<evidence type="ECO:0000269" key="37">
    <source>
    </source>
</evidence>
<evidence type="ECO:0000269" key="38">
    <source>
    </source>
</evidence>
<evidence type="ECO:0000269" key="39">
    <source>
    </source>
</evidence>
<evidence type="ECO:0000269" key="40">
    <source>
    </source>
</evidence>
<evidence type="ECO:0000269" key="41">
    <source>
    </source>
</evidence>
<evidence type="ECO:0000269" key="42">
    <source>
    </source>
</evidence>
<evidence type="ECO:0000269" key="43">
    <source>
    </source>
</evidence>
<evidence type="ECO:0000269" key="44">
    <source>
    </source>
</evidence>
<evidence type="ECO:0000269" key="45">
    <source>
    </source>
</evidence>
<evidence type="ECO:0000269" key="46">
    <source>
    </source>
</evidence>
<evidence type="ECO:0000269" key="47">
    <source>
    </source>
</evidence>
<evidence type="ECO:0000269" key="48">
    <source>
    </source>
</evidence>
<evidence type="ECO:0000269" key="49">
    <source>
    </source>
</evidence>
<evidence type="ECO:0000269" key="50">
    <source>
    </source>
</evidence>
<evidence type="ECO:0000269" key="51">
    <source>
    </source>
</evidence>
<evidence type="ECO:0000269" key="52">
    <source>
    </source>
</evidence>
<evidence type="ECO:0000269" key="53">
    <source>
    </source>
</evidence>
<evidence type="ECO:0000269" key="54">
    <source>
    </source>
</evidence>
<evidence type="ECO:0000269" key="55">
    <source>
    </source>
</evidence>
<evidence type="ECO:0000269" key="56">
    <source>
    </source>
</evidence>
<evidence type="ECO:0000269" key="57">
    <source>
    </source>
</evidence>
<evidence type="ECO:0000269" key="58">
    <source ref="12"/>
</evidence>
<evidence type="ECO:0000303" key="59">
    <source>
    </source>
</evidence>
<evidence type="ECO:0000303" key="60">
    <source>
    </source>
</evidence>
<evidence type="ECO:0000303" key="61">
    <source>
    </source>
</evidence>
<evidence type="ECO:0000303" key="62">
    <source>
    </source>
</evidence>
<evidence type="ECO:0000305" key="63"/>
<evidence type="ECO:0000305" key="64">
    <source>
    </source>
</evidence>
<evidence type="ECO:0007744" key="65">
    <source>
        <dbReference type="PDB" id="1I2M"/>
    </source>
</evidence>
<evidence type="ECO:0007744" key="66">
    <source>
        <dbReference type="PDB" id="1IBR"/>
    </source>
</evidence>
<evidence type="ECO:0007744" key="67">
    <source>
        <dbReference type="PDB" id="1K5D"/>
    </source>
</evidence>
<evidence type="ECO:0007744" key="68">
    <source>
        <dbReference type="PDB" id="1K5G"/>
    </source>
</evidence>
<evidence type="ECO:0007744" key="69">
    <source>
        <dbReference type="PDB" id="1QBK"/>
    </source>
</evidence>
<evidence type="ECO:0007744" key="70">
    <source>
        <dbReference type="PDB" id="1RRP"/>
    </source>
</evidence>
<evidence type="ECO:0007744" key="71">
    <source>
        <dbReference type="PDB" id="3CH5"/>
    </source>
</evidence>
<evidence type="ECO:0007744" key="72">
    <source>
        <dbReference type="PDB" id="3GJ0"/>
    </source>
</evidence>
<evidence type="ECO:0007744" key="73">
    <source>
        <dbReference type="PDB" id="3GJ3"/>
    </source>
</evidence>
<evidence type="ECO:0007744" key="74">
    <source>
        <dbReference type="PDB" id="3GJ4"/>
    </source>
</evidence>
<evidence type="ECO:0007744" key="75">
    <source>
        <dbReference type="PDB" id="3GJ5"/>
    </source>
</evidence>
<evidence type="ECO:0007744" key="76">
    <source>
        <dbReference type="PDB" id="3GJ6"/>
    </source>
</evidence>
<evidence type="ECO:0007744" key="77">
    <source>
        <dbReference type="PDB" id="3GJ7"/>
    </source>
</evidence>
<evidence type="ECO:0007744" key="78">
    <source>
        <dbReference type="PDB" id="3GJ8"/>
    </source>
</evidence>
<evidence type="ECO:0007744" key="79">
    <source>
        <dbReference type="PDB" id="3GJX"/>
    </source>
</evidence>
<evidence type="ECO:0007744" key="80">
    <source>
        <dbReference type="PDB" id="3NBY"/>
    </source>
</evidence>
<evidence type="ECO:0007744" key="81">
    <source>
        <dbReference type="PDB" id="3NBZ"/>
    </source>
</evidence>
<evidence type="ECO:0007744" key="82">
    <source>
        <dbReference type="PDB" id="3NC0"/>
    </source>
</evidence>
<evidence type="ECO:0007744" key="83">
    <source>
        <dbReference type="PDB" id="3NC1"/>
    </source>
</evidence>
<evidence type="ECO:0007744" key="84">
    <source>
        <dbReference type="PDB" id="3ZJY"/>
    </source>
</evidence>
<evidence type="ECO:0007744" key="85">
    <source>
        <dbReference type="PDB" id="4C0Q"/>
    </source>
</evidence>
<evidence type="ECO:0007744" key="86">
    <source>
        <dbReference type="PDB" id="4OL0"/>
    </source>
</evidence>
<evidence type="ECO:0007744" key="87">
    <source>
        <dbReference type="PDB" id="5CIQ"/>
    </source>
</evidence>
<evidence type="ECO:0007744" key="88">
    <source>
        <dbReference type="PDB" id="5CIT"/>
    </source>
</evidence>
<evidence type="ECO:0007744" key="89">
    <source>
        <dbReference type="PDB" id="5CIW"/>
    </source>
</evidence>
<evidence type="ECO:0007744" key="90">
    <source>
        <dbReference type="PDB" id="5CJ2"/>
    </source>
</evidence>
<evidence type="ECO:0007744" key="91">
    <source>
        <dbReference type="PDB" id="5CLL"/>
    </source>
</evidence>
<evidence type="ECO:0007744" key="92">
    <source>
        <dbReference type="PDB" id="5CLQ"/>
    </source>
</evidence>
<evidence type="ECO:0007744" key="93">
    <source>
        <dbReference type="PDB" id="5DH9"/>
    </source>
</evidence>
<evidence type="ECO:0007744" key="94">
    <source>
        <dbReference type="PDB" id="5DHA"/>
    </source>
</evidence>
<evidence type="ECO:0007744" key="95">
    <source>
        <dbReference type="PDB" id="5DHF"/>
    </source>
</evidence>
<evidence type="ECO:0007744" key="96">
    <source>
        <dbReference type="PDB" id="5DI9"/>
    </source>
</evidence>
<evidence type="ECO:0007744" key="97">
    <source>
        <dbReference type="PDB" id="5DIF"/>
    </source>
</evidence>
<evidence type="ECO:0007744" key="98">
    <source>
        <dbReference type="PDB" id="5DIS"/>
    </source>
</evidence>
<evidence type="ECO:0007744" key="99">
    <source>
        <dbReference type="PDB" id="5DLQ"/>
    </source>
</evidence>
<evidence type="ECO:0007744" key="100">
    <source>
        <dbReference type="PDB" id="5JLJ"/>
    </source>
</evidence>
<evidence type="ECO:0007744" key="101">
    <source>
        <dbReference type="PDB" id="5UWH"/>
    </source>
</evidence>
<evidence type="ECO:0007744" key="102">
    <source>
        <dbReference type="PDB" id="5UWI"/>
    </source>
</evidence>
<evidence type="ECO:0007744" key="103">
    <source>
        <dbReference type="PDB" id="5UWJ"/>
    </source>
</evidence>
<evidence type="ECO:0007744" key="104">
    <source>
        <dbReference type="PDB" id="5UWO"/>
    </source>
</evidence>
<evidence type="ECO:0007744" key="105">
    <source>
        <dbReference type="PDB" id="5UWP"/>
    </source>
</evidence>
<evidence type="ECO:0007744" key="106">
    <source>
        <dbReference type="PDB" id="5UWQ"/>
    </source>
</evidence>
<evidence type="ECO:0007744" key="107">
    <source>
        <dbReference type="PDB" id="5UWR"/>
    </source>
</evidence>
<evidence type="ECO:0007744" key="108">
    <source>
        <dbReference type="PDB" id="5UWS"/>
    </source>
</evidence>
<evidence type="ECO:0007744" key="109">
    <source>
        <dbReference type="PDB" id="5UWT"/>
    </source>
</evidence>
<evidence type="ECO:0007744" key="110">
    <source>
        <dbReference type="PDB" id="5UWU"/>
    </source>
</evidence>
<evidence type="ECO:0007744" key="111">
    <source>
        <dbReference type="PDB" id="5UWW"/>
    </source>
</evidence>
<evidence type="ECO:0007744" key="112">
    <source>
    </source>
</evidence>
<evidence type="ECO:0007744" key="113">
    <source>
    </source>
</evidence>
<evidence type="ECO:0007744" key="114">
    <source>
    </source>
</evidence>
<evidence type="ECO:0007744" key="115">
    <source>
    </source>
</evidence>
<evidence type="ECO:0007744" key="116">
    <source>
    </source>
</evidence>
<evidence type="ECO:0007744" key="117">
    <source>
    </source>
</evidence>
<evidence type="ECO:0007829" key="118">
    <source>
        <dbReference type="PDB" id="1K5D"/>
    </source>
</evidence>
<evidence type="ECO:0007829" key="119">
    <source>
        <dbReference type="PDB" id="1QBK"/>
    </source>
</evidence>
<evidence type="ECO:0007829" key="120">
    <source>
        <dbReference type="PDB" id="1RRP"/>
    </source>
</evidence>
<evidence type="ECO:0007829" key="121">
    <source>
        <dbReference type="PDB" id="2MMG"/>
    </source>
</evidence>
<evidence type="ECO:0007829" key="122">
    <source>
        <dbReference type="PDB" id="3GJ0"/>
    </source>
</evidence>
<evidence type="ECO:0007829" key="123">
    <source>
        <dbReference type="PDB" id="5CJ2"/>
    </source>
</evidence>
<evidence type="ECO:0007829" key="124">
    <source>
        <dbReference type="PDB" id="7MNX"/>
    </source>
</evidence>
<evidence type="ECO:0007829" key="125">
    <source>
        <dbReference type="PDB" id="8UX1"/>
    </source>
</evidence>
<name>RAN_HUMAN</name>
<feature type="initiator methionine" description="Removed" evidence="58 112 114 115">
    <location>
        <position position="1"/>
    </location>
</feature>
<feature type="chain" id="PRO_0000208696" description="GTP-binding nuclear protein Ran">
    <location>
        <begin position="2"/>
        <end position="216"/>
    </location>
</feature>
<feature type="domain" description="Small GTPase Ran-type" evidence="3">
    <location>
        <begin position="7"/>
        <end position="171"/>
    </location>
</feature>
<feature type="region of interest" description="Switch-I" evidence="3">
    <location>
        <begin position="37"/>
        <end position="45"/>
    </location>
</feature>
<feature type="region of interest" description="Switch-II" evidence="3">
    <location>
        <begin position="68"/>
        <end position="84"/>
    </location>
</feature>
<feature type="region of interest" description="Interaction with RANBP1" evidence="47">
    <location>
        <begin position="211"/>
        <end position="216"/>
    </location>
</feature>
<feature type="binding site" evidence="4 6 7 14 25 27 28 34 35 37 39 41 46 66 68 70 71 72 73 74 75 76 77 78 79 80 81 82 83 84 85 86 87 88 89 92 93 94 95 96 97 98 99 101 102 103 104 105 106 107 108 109 110 111">
    <location>
        <begin position="18"/>
        <end position="25"/>
    </location>
    <ligand>
        <name>GTP</name>
        <dbReference type="ChEBI" id="CHEBI:37565"/>
    </ligand>
</feature>
<feature type="binding site" evidence="4 6 7 14 27 34 35 37 39 41 46 66 67 69 70 79 80 81 82 83 84 85 86 91 92 93 94 95 96 97 98 99 100 101 102 103 104 105 106 107 108 109 110 111">
    <location>
        <begin position="36"/>
        <end position="42"/>
    </location>
    <ligand>
        <name>GTP</name>
        <dbReference type="ChEBI" id="CHEBI:37565"/>
    </ligand>
</feature>
<feature type="binding site" evidence="4 6 7 14 25 27 28 34 35 37 39 41 46 66 67 69 70 79 80 81 82 83 84 85 86 93 94 95 96 97 98 99 100 101 102 103 104 105 106 107 108 109 110 111">
    <location>
        <position position="68"/>
    </location>
    <ligand>
        <name>GTP</name>
        <dbReference type="ChEBI" id="CHEBI:37565"/>
    </ligand>
</feature>
<feature type="binding site" evidence="4 6 7 14 25 27 28 34 35 37 39 41 46 66 67 69 70 71 72 73 74 75 76 77 78 79 80 81 82 83 84 85 86 87 88 89 90 91 93 94 95 96 97 98 99 100 101 102 103 104 105 106 107 108 109 110 111">
    <location>
        <begin position="122"/>
        <end position="125"/>
    </location>
    <ligand>
        <name>GTP</name>
        <dbReference type="ChEBI" id="CHEBI:37565"/>
    </ligand>
</feature>
<feature type="binding site" evidence="4 6 7 14 25 27 28 34 35 37 39 41 46 68 71 72 73 74 75 76 77 78 79 80 81 82 83 84 85 86 87 88 89 90 91 92 93 94 95 96 97 98 99 100 101 102 103 104 105 106 107 108 109 110 111">
    <location>
        <begin position="150"/>
        <end position="152"/>
    </location>
    <ligand>
        <name>GTP</name>
        <dbReference type="ChEBI" id="CHEBI:37565"/>
    </ligand>
</feature>
<feature type="site" description="Essential for GTP hydrolysis" evidence="24 37 50">
    <location>
        <position position="69"/>
    </location>
</feature>
<feature type="modified residue" description="N-acetylalanine" evidence="58 112 114 115">
    <location>
        <position position="2"/>
    </location>
</feature>
<feature type="modified residue" description="Phosphothreonine" evidence="116">
    <location>
        <position position="24"/>
    </location>
</feature>
<feature type="modified residue" description="N6-acetyllysine" evidence="44">
    <location>
        <position position="37"/>
    </location>
</feature>
<feature type="modified residue" description="N6-acetyllysine" evidence="113">
    <location>
        <position position="60"/>
    </location>
</feature>
<feature type="modified residue" description="N6-acetyllysine; alternate" evidence="113">
    <location>
        <position position="71"/>
    </location>
</feature>
<feature type="modified residue" description="N6-acetyllysine" evidence="113">
    <location>
        <position position="99"/>
    </location>
</feature>
<feature type="modified residue" description="N6-acetyllysine" evidence="42">
    <location>
        <position position="134"/>
    </location>
</feature>
<feature type="modified residue" description="N6-acetyllysine; alternate" evidence="113">
    <location>
        <position position="159"/>
    </location>
</feature>
<feature type="modified residue" description="N6-succinyllysine; alternate" evidence="2">
    <location>
        <position position="159"/>
    </location>
</feature>
<feature type="cross-link" description="Glycyl lysine isopeptide (Lys-Gly) (interchain with G-Cter in SUMO2); alternate" evidence="117">
    <location>
        <position position="71"/>
    </location>
</feature>
<feature type="cross-link" description="Glycyl lysine isopeptide (Lys-Gly) (interchain with G-Cter in ubiquitin); alternate">
    <location>
        <position position="71"/>
    </location>
</feature>
<feature type="cross-link" description="Glycyl lysine isopeptide (Lys-Gly) (interchain with G-Cter in SUMO2)" evidence="117">
    <location>
        <position position="152"/>
    </location>
</feature>
<feature type="mutagenesis site" description="Blocks DNA replication; when associated with L-69." evidence="49">
    <original>G</original>
    <variation>V</variation>
    <location>
        <position position="19"/>
    </location>
</feature>
<feature type="mutagenesis site" description="Has low binding affinity for GTP and GDP. Almost completely abolishes interaction with BIRC5." evidence="24">
    <original>T</original>
    <variation>L</variation>
    <location>
        <position position="24"/>
    </location>
</feature>
<feature type="mutagenesis site" description="Has low binding affinity for GTP and GDP. Decreases nuclear import of proteins and RNA. Stabilizes the interaction with RCC1. No effect on nuclear location during interphase. Loss of activity in triggering microtubule assembly at mitotic chromosomes." evidence="9 15 45 50 54">
    <original>T</original>
    <variation>N</variation>
    <location>
        <position position="24"/>
    </location>
</feature>
<feature type="mutagenesis site" description="Minor effect on the interaction with the alpha phosphate group of bound GTP." evidence="37">
    <original>T</original>
    <variation>A</variation>
    <location>
        <position position="25"/>
    </location>
</feature>
<feature type="mutagenesis site" description="Mimics acetylation; enhances the nuclear export of RELA/p65." evidence="44">
    <original>K</original>
    <variation>Q</variation>
    <location>
        <position position="37"/>
    </location>
</feature>
<feature type="mutagenesis site" description="Decreased acetylation." evidence="44">
    <original>K</original>
    <variation>R</variation>
    <location>
        <position position="37"/>
    </location>
</feature>
<feature type="mutagenesis site" description="Abolishes steric hindrance that traps the essential Q-69 in an unreactive position, and causes slow GTP hydrolysis in wild-type. Loss of one hydrogen bond with the gamma phosphate group of bound GTP." evidence="37">
    <original>Y</original>
    <variation>A</variation>
    <location>
        <position position="39"/>
    </location>
</feature>
<feature type="mutagenesis site" description="Strongly decreased GTPase activity. Probably locked in the GTP-bound form. Loss of interaction with NUTF2. Decreases nuclear location and leads to cytoplasmic location during interphase. Loss of function in importin-mediated protein nuclear import. High activity in triggering microtubule assembly at mitotic chromosomes. Blocks DNA replication; when associated with V-19." evidence="9 15 23 24 45 49 50 54 56">
    <original>Q</original>
    <variation>L</variation>
    <location>
        <position position="69"/>
    </location>
</feature>
<feature type="mutagenesis site" description="Unable to hydrolyze GTP. Increases binding to BIRC5 and promotes exaggerated spindle formation." evidence="24 33 35">
    <original>Q</original>
    <variation>N</variation>
    <location>
        <position position="69"/>
    </location>
</feature>
<feature type="mutagenesis site" description="Strongly decreases the relase of bound GDP." evidence="11">
    <original>E</original>
    <variation>A</variation>
    <location>
        <position position="70"/>
    </location>
</feature>
<feature type="mutagenesis site" description="Probable loss of interaction with NUTF2. Loss of transport to the nucleus." evidence="56">
    <original>R</original>
    <variation>E</variation>
    <location>
        <position position="76"/>
    </location>
</feature>
<feature type="mutagenesis site" description="Loss of normal mitotic chromosome segregation and defective mitotic spindle orientation." evidence="42">
    <original>K</original>
    <variation>Q</variation>
    <location>
        <position position="134"/>
    </location>
</feature>
<feature type="mutagenesis site" description="Loss of normal mitotic chromosome segregation and formation of sister chromatid bridges." evidence="42">
    <original>K</original>
    <variation>R</variation>
    <location>
        <position position="134"/>
    </location>
</feature>
<feature type="mutagenesis site" description="No effect on GTPase activity. Abolishes interaction with RANBP1." evidence="47">
    <location>
        <begin position="211"/>
        <end position="216"/>
    </location>
</feature>
<feature type="sequence conflict" description="In Ref. 11; AAH72000." evidence="63" ref="11">
    <original>A</original>
    <variation>T</variation>
    <location>
        <position position="2"/>
    </location>
</feature>
<feature type="sequence conflict" description="In Ref. 5; AAC99400." evidence="63" ref="5">
    <original>A</original>
    <variation>C</variation>
    <location>
        <position position="181"/>
    </location>
</feature>
<feature type="turn" evidence="121">
    <location>
        <begin position="2"/>
        <end position="5"/>
    </location>
</feature>
<feature type="strand" evidence="122">
    <location>
        <begin position="10"/>
        <end position="17"/>
    </location>
</feature>
<feature type="strand" evidence="119">
    <location>
        <begin position="18"/>
        <end position="22"/>
    </location>
</feature>
<feature type="helix" evidence="122">
    <location>
        <begin position="23"/>
        <end position="27"/>
    </location>
</feature>
<feature type="turn" evidence="125">
    <location>
        <begin position="28"/>
        <end position="30"/>
    </location>
</feature>
<feature type="helix" evidence="122">
    <location>
        <begin position="31"/>
        <end position="35"/>
    </location>
</feature>
<feature type="strand" evidence="122">
    <location>
        <begin position="38"/>
        <end position="40"/>
    </location>
</feature>
<feature type="turn" evidence="122">
    <location>
        <begin position="41"/>
        <end position="44"/>
    </location>
</feature>
<feature type="strand" evidence="122">
    <location>
        <begin position="45"/>
        <end position="54"/>
    </location>
</feature>
<feature type="strand" evidence="122">
    <location>
        <begin position="57"/>
        <end position="66"/>
    </location>
</feature>
<feature type="helix" evidence="122">
    <location>
        <begin position="69"/>
        <end position="71"/>
    </location>
</feature>
<feature type="helix" evidence="118">
    <location>
        <begin position="74"/>
        <end position="76"/>
    </location>
</feature>
<feature type="helix" evidence="122">
    <location>
        <begin position="77"/>
        <end position="80"/>
    </location>
</feature>
<feature type="strand" evidence="122">
    <location>
        <begin position="85"/>
        <end position="91"/>
    </location>
</feature>
<feature type="strand" evidence="120">
    <location>
        <begin position="92"/>
        <end position="94"/>
    </location>
</feature>
<feature type="helix" evidence="122">
    <location>
        <begin position="95"/>
        <end position="99"/>
    </location>
</feature>
<feature type="helix" evidence="122">
    <location>
        <begin position="101"/>
        <end position="111"/>
    </location>
</feature>
<feature type="strand" evidence="123">
    <location>
        <begin position="112"/>
        <end position="114"/>
    </location>
</feature>
<feature type="strand" evidence="122">
    <location>
        <begin position="117"/>
        <end position="122"/>
    </location>
</feature>
<feature type="strand" evidence="122">
    <location>
        <begin position="126"/>
        <end position="128"/>
    </location>
</feature>
<feature type="helix" evidence="122">
    <location>
        <begin position="133"/>
        <end position="135"/>
    </location>
</feature>
<feature type="helix" evidence="122">
    <location>
        <begin position="138"/>
        <end position="142"/>
    </location>
</feature>
<feature type="strand" evidence="122">
    <location>
        <begin position="145"/>
        <end position="148"/>
    </location>
</feature>
<feature type="turn" evidence="122">
    <location>
        <begin position="151"/>
        <end position="154"/>
    </location>
</feature>
<feature type="turn" evidence="122">
    <location>
        <begin position="156"/>
        <end position="158"/>
    </location>
</feature>
<feature type="helix" evidence="122">
    <location>
        <begin position="159"/>
        <end position="169"/>
    </location>
</feature>
<feature type="strand" evidence="122">
    <location>
        <begin position="176"/>
        <end position="178"/>
    </location>
</feature>
<feature type="turn" evidence="119">
    <location>
        <begin position="185"/>
        <end position="187"/>
    </location>
</feature>
<feature type="helix" evidence="122">
    <location>
        <begin position="191"/>
        <end position="205"/>
    </location>
</feature>
<feature type="helix" evidence="124">
    <location>
        <begin position="210"/>
        <end position="212"/>
    </location>
</feature>
<keyword id="KW-0002">3D-structure</keyword>
<keyword id="KW-0007">Acetylation</keyword>
<keyword id="KW-0131">Cell cycle</keyword>
<keyword id="KW-0132">Cell division</keyword>
<keyword id="KW-0963">Cytoplasm</keyword>
<keyword id="KW-0903">Direct protein sequencing</keyword>
<keyword id="KW-0342">GTP-binding</keyword>
<keyword id="KW-0945">Host-virus interaction</keyword>
<keyword id="KW-0378">Hydrolase</keyword>
<keyword id="KW-1017">Isopeptide bond</keyword>
<keyword id="KW-0460">Magnesium</keyword>
<keyword id="KW-0479">Metal-binding</keyword>
<keyword id="KW-0498">Mitosis</keyword>
<keyword id="KW-0547">Nucleotide-binding</keyword>
<keyword id="KW-0539">Nucleus</keyword>
<keyword id="KW-0597">Phosphoprotein</keyword>
<keyword id="KW-0653">Protein transport</keyword>
<keyword id="KW-1267">Proteomics identification</keyword>
<keyword id="KW-1185">Reference proteome</keyword>
<keyword id="KW-0813">Transport</keyword>
<keyword id="KW-0832">Ubl conjugation</keyword>
<reference key="1">
    <citation type="journal article" date="1990" name="Mol. Cell. Biol.">
        <title>Characterization of four novel ras-like genes expressed in a human teratocarcinoma cell line.</title>
        <authorList>
            <person name="Drivas G.T."/>
            <person name="Shih A."/>
            <person name="Coutavas E."/>
            <person name="Rush M.G."/>
            <person name="D'Eustachio P."/>
        </authorList>
    </citation>
    <scope>NUCLEOTIDE SEQUENCE [MRNA]</scope>
    <scope>TISSUE SPECIFICITY</scope>
    <source>
        <tissue>Teratocarcinoma</tissue>
    </source>
</reference>
<reference key="2">
    <citation type="journal article" date="1991" name="Cell">
        <title>Premature initiation of mitosis in yeast lacking RCC1 or an interacting GTPase.</title>
        <authorList>
            <person name="Matsumoto T."/>
            <person name="Beach D.H."/>
        </authorList>
    </citation>
    <scope>SEQUENCE REVISION TO C-TERMINUS</scope>
</reference>
<reference key="3">
    <citation type="journal article" date="1993" name="J. Cell Biol.">
        <title>Ran/TC4: a small nuclear GTP-binding protein that regulates DNA synthesis.</title>
        <authorList>
            <person name="Ren M."/>
            <person name="Drivas G.T."/>
            <person name="D'Eustachio P."/>
            <person name="Rush M.G."/>
        </authorList>
    </citation>
    <scope>NUCLEOTIDE SEQUENCE [MRNA]</scope>
    <scope>SUBCELLULAR LOCATION</scope>
    <scope>MUTAGENESIS OF GLY-19 AND GLN-69</scope>
    <source>
        <tissue>Brain</tissue>
    </source>
</reference>
<reference key="4">
    <citation type="journal article" date="1999" name="J. Biol. Chem.">
        <title>The linkage of Kennedy's neuron disease to ARA24, the first identified androgen receptor polyglutamine region-associated coactivator.</title>
        <authorList>
            <person name="Hsiao P.-W."/>
            <person name="Lin D.-L."/>
            <person name="Nakao R."/>
            <person name="Chang C."/>
        </authorList>
    </citation>
    <scope>NUCLEOTIDE SEQUENCE [MRNA]</scope>
    <scope>INTERACTION WITH AR</scope>
    <scope>FUNCTION</scope>
    <source>
        <tissue>Brain</tissue>
    </source>
</reference>
<reference key="5">
    <citation type="journal article" date="2000" name="Genome Res.">
        <title>Cloning and functional analysis of cDNAs with open reading frames for 300 previously undefined genes expressed in CD34+ hematopoietic stem/progenitor cells.</title>
        <authorList>
            <person name="Zhang Q.-H."/>
            <person name="Ye M."/>
            <person name="Wu X.-Y."/>
            <person name="Ren S.-X."/>
            <person name="Zhao M."/>
            <person name="Zhao C.-J."/>
            <person name="Fu G."/>
            <person name="Shen Y."/>
            <person name="Fan H.-Y."/>
            <person name="Lu G."/>
            <person name="Zhong M."/>
            <person name="Xu X.-R."/>
            <person name="Han Z.-G."/>
            <person name="Zhang J.-W."/>
            <person name="Tao J."/>
            <person name="Huang Q.-H."/>
            <person name="Zhou J."/>
            <person name="Hu G.-X."/>
            <person name="Gu J."/>
            <person name="Chen S.-J."/>
            <person name="Chen Z."/>
        </authorList>
    </citation>
    <scope>NUCLEOTIDE SEQUENCE [LARGE SCALE MRNA]</scope>
    <source>
        <tissue>Umbilical cord blood</tissue>
    </source>
</reference>
<reference key="6">
    <citation type="submission" date="2002-03" db="EMBL/GenBank/DDBJ databases">
        <title>cDNA clones of human proteins involved in signal transduction sequenced by the Guthrie cDNA resource center (www.cdna.org).</title>
        <authorList>
            <person name="Puhl H.L. III"/>
            <person name="Ikeda S.R."/>
            <person name="Aronstam R.S."/>
        </authorList>
    </citation>
    <scope>NUCLEOTIDE SEQUENCE [LARGE SCALE MRNA]</scope>
    <source>
        <tissue>Brain</tissue>
    </source>
</reference>
<reference key="7">
    <citation type="submission" date="2003-05" db="EMBL/GenBank/DDBJ databases">
        <title>Cloning of human full-length CDSs in BD Creator(TM) system donor vector.</title>
        <authorList>
            <person name="Kalnine N."/>
            <person name="Chen X."/>
            <person name="Rolfs A."/>
            <person name="Halleck A."/>
            <person name="Hines L."/>
            <person name="Eisenstein S."/>
            <person name="Koundinya M."/>
            <person name="Raphael J."/>
            <person name="Moreira D."/>
            <person name="Kelley T."/>
            <person name="LaBaer J."/>
            <person name="Lin Y."/>
            <person name="Phelan M."/>
            <person name="Farmer A."/>
        </authorList>
    </citation>
    <scope>NUCLEOTIDE SEQUENCE [LARGE SCALE MRNA]</scope>
</reference>
<reference key="8">
    <citation type="submission" date="2004-05" db="EMBL/GenBank/DDBJ databases">
        <title>Cloning of human full open reading frames in Gateway(TM) system entry vector (pDONR201).</title>
        <authorList>
            <person name="Ebert L."/>
            <person name="Schick M."/>
            <person name="Neubert P."/>
            <person name="Schatten R."/>
            <person name="Henze S."/>
            <person name="Korn B."/>
        </authorList>
    </citation>
    <scope>NUCLEOTIDE SEQUENCE [LARGE SCALE MRNA]</scope>
</reference>
<reference key="9">
    <citation type="journal article" date="2004" name="Nat. Genet.">
        <title>Complete sequencing and characterization of 21,243 full-length human cDNAs.</title>
        <authorList>
            <person name="Ota T."/>
            <person name="Suzuki Y."/>
            <person name="Nishikawa T."/>
            <person name="Otsuki T."/>
            <person name="Sugiyama T."/>
            <person name="Irie R."/>
            <person name="Wakamatsu A."/>
            <person name="Hayashi K."/>
            <person name="Sato H."/>
            <person name="Nagai K."/>
            <person name="Kimura K."/>
            <person name="Makita H."/>
            <person name="Sekine M."/>
            <person name="Obayashi M."/>
            <person name="Nishi T."/>
            <person name="Shibahara T."/>
            <person name="Tanaka T."/>
            <person name="Ishii S."/>
            <person name="Yamamoto J."/>
            <person name="Saito K."/>
            <person name="Kawai Y."/>
            <person name="Isono Y."/>
            <person name="Nakamura Y."/>
            <person name="Nagahari K."/>
            <person name="Murakami K."/>
            <person name="Yasuda T."/>
            <person name="Iwayanagi T."/>
            <person name="Wagatsuma M."/>
            <person name="Shiratori A."/>
            <person name="Sudo H."/>
            <person name="Hosoiri T."/>
            <person name="Kaku Y."/>
            <person name="Kodaira H."/>
            <person name="Kondo H."/>
            <person name="Sugawara M."/>
            <person name="Takahashi M."/>
            <person name="Kanda K."/>
            <person name="Yokoi T."/>
            <person name="Furuya T."/>
            <person name="Kikkawa E."/>
            <person name="Omura Y."/>
            <person name="Abe K."/>
            <person name="Kamihara K."/>
            <person name="Katsuta N."/>
            <person name="Sato K."/>
            <person name="Tanikawa M."/>
            <person name="Yamazaki M."/>
            <person name="Ninomiya K."/>
            <person name="Ishibashi T."/>
            <person name="Yamashita H."/>
            <person name="Murakawa K."/>
            <person name="Fujimori K."/>
            <person name="Tanai H."/>
            <person name="Kimata M."/>
            <person name="Watanabe M."/>
            <person name="Hiraoka S."/>
            <person name="Chiba Y."/>
            <person name="Ishida S."/>
            <person name="Ono Y."/>
            <person name="Takiguchi S."/>
            <person name="Watanabe S."/>
            <person name="Yosida M."/>
            <person name="Hotuta T."/>
            <person name="Kusano J."/>
            <person name="Kanehori K."/>
            <person name="Takahashi-Fujii A."/>
            <person name="Hara H."/>
            <person name="Tanase T.-O."/>
            <person name="Nomura Y."/>
            <person name="Togiya S."/>
            <person name="Komai F."/>
            <person name="Hara R."/>
            <person name="Takeuchi K."/>
            <person name="Arita M."/>
            <person name="Imose N."/>
            <person name="Musashino K."/>
            <person name="Yuuki H."/>
            <person name="Oshima A."/>
            <person name="Sasaki N."/>
            <person name="Aotsuka S."/>
            <person name="Yoshikawa Y."/>
            <person name="Matsunawa H."/>
            <person name="Ichihara T."/>
            <person name="Shiohata N."/>
            <person name="Sano S."/>
            <person name="Moriya S."/>
            <person name="Momiyama H."/>
            <person name="Satoh N."/>
            <person name="Takami S."/>
            <person name="Terashima Y."/>
            <person name="Suzuki O."/>
            <person name="Nakagawa S."/>
            <person name="Senoh A."/>
            <person name="Mizoguchi H."/>
            <person name="Goto Y."/>
            <person name="Shimizu F."/>
            <person name="Wakebe H."/>
            <person name="Hishigaki H."/>
            <person name="Watanabe T."/>
            <person name="Sugiyama A."/>
            <person name="Takemoto M."/>
            <person name="Kawakami B."/>
            <person name="Yamazaki M."/>
            <person name="Watanabe K."/>
            <person name="Kumagai A."/>
            <person name="Itakura S."/>
            <person name="Fukuzumi Y."/>
            <person name="Fujimori Y."/>
            <person name="Komiyama M."/>
            <person name="Tashiro H."/>
            <person name="Tanigami A."/>
            <person name="Fujiwara T."/>
            <person name="Ono T."/>
            <person name="Yamada K."/>
            <person name="Fujii Y."/>
            <person name="Ozaki K."/>
            <person name="Hirao M."/>
            <person name="Ohmori Y."/>
            <person name="Kawabata A."/>
            <person name="Hikiji T."/>
            <person name="Kobatake N."/>
            <person name="Inagaki H."/>
            <person name="Ikema Y."/>
            <person name="Okamoto S."/>
            <person name="Okitani R."/>
            <person name="Kawakami T."/>
            <person name="Noguchi S."/>
            <person name="Itoh T."/>
            <person name="Shigeta K."/>
            <person name="Senba T."/>
            <person name="Matsumura K."/>
            <person name="Nakajima Y."/>
            <person name="Mizuno T."/>
            <person name="Morinaga M."/>
            <person name="Sasaki M."/>
            <person name="Togashi T."/>
            <person name="Oyama M."/>
            <person name="Hata H."/>
            <person name="Watanabe M."/>
            <person name="Komatsu T."/>
            <person name="Mizushima-Sugano J."/>
            <person name="Satoh T."/>
            <person name="Shirai Y."/>
            <person name="Takahashi Y."/>
            <person name="Nakagawa K."/>
            <person name="Okumura K."/>
            <person name="Nagase T."/>
            <person name="Nomura N."/>
            <person name="Kikuchi H."/>
            <person name="Masuho Y."/>
            <person name="Yamashita R."/>
            <person name="Nakai K."/>
            <person name="Yada T."/>
            <person name="Nakamura Y."/>
            <person name="Ohara O."/>
            <person name="Isogai T."/>
            <person name="Sugano S."/>
        </authorList>
    </citation>
    <scope>NUCLEOTIDE SEQUENCE [LARGE SCALE MRNA]</scope>
    <source>
        <tissue>Hippocampus</tissue>
    </source>
</reference>
<reference key="10">
    <citation type="submission" date="2005-07" db="EMBL/GenBank/DDBJ databases">
        <authorList>
            <person name="Mural R.J."/>
            <person name="Istrail S."/>
            <person name="Sutton G.G."/>
            <person name="Florea L."/>
            <person name="Halpern A.L."/>
            <person name="Mobarry C.M."/>
            <person name="Lippert R."/>
            <person name="Walenz B."/>
            <person name="Shatkay H."/>
            <person name="Dew I."/>
            <person name="Miller J.R."/>
            <person name="Flanigan M.J."/>
            <person name="Edwards N.J."/>
            <person name="Bolanos R."/>
            <person name="Fasulo D."/>
            <person name="Halldorsson B.V."/>
            <person name="Hannenhalli S."/>
            <person name="Turner R."/>
            <person name="Yooseph S."/>
            <person name="Lu F."/>
            <person name="Nusskern D.R."/>
            <person name="Shue B.C."/>
            <person name="Zheng X.H."/>
            <person name="Zhong F."/>
            <person name="Delcher A.L."/>
            <person name="Huson D.H."/>
            <person name="Kravitz S.A."/>
            <person name="Mouchard L."/>
            <person name="Reinert K."/>
            <person name="Remington K.A."/>
            <person name="Clark A.G."/>
            <person name="Waterman M.S."/>
            <person name="Eichler E.E."/>
            <person name="Adams M.D."/>
            <person name="Hunkapiller M.W."/>
            <person name="Myers E.W."/>
            <person name="Venter J.C."/>
        </authorList>
    </citation>
    <scope>NUCLEOTIDE SEQUENCE [LARGE SCALE GENOMIC DNA]</scope>
</reference>
<reference key="11">
    <citation type="journal article" date="2004" name="Genome Res.">
        <title>The status, quality, and expansion of the NIH full-length cDNA project: the Mammalian Gene Collection (MGC).</title>
        <authorList>
            <consortium name="The MGC Project Team"/>
        </authorList>
    </citation>
    <scope>NUCLEOTIDE SEQUENCE [LARGE SCALE MRNA]</scope>
    <source>
        <tissue>Lymph</tissue>
        <tissue>Ovary</tissue>
        <tissue>Skin</tissue>
        <tissue>Uterus</tissue>
    </source>
</reference>
<reference key="12">
    <citation type="submission" date="2006-02" db="UniProtKB">
        <authorList>
            <person name="Bienvenut W.V."/>
            <person name="Claeys D."/>
        </authorList>
    </citation>
    <scope>PROTEIN SEQUENCE OF 2-23 AND 143-166</scope>
    <scope>CLEAVAGE OF INITIATOR METHIONINE</scope>
    <scope>ACETYLATION AT ALA-2</scope>
    <scope>IDENTIFICATION BY MASS SPECTROMETRY</scope>
    <source>
        <tissue>Platelet</tissue>
    </source>
</reference>
<reference key="13">
    <citation type="submission" date="2007-03" db="UniProtKB">
        <authorList>
            <person name="Lubec G."/>
            <person name="Afjehi-Sadat L."/>
        </authorList>
    </citation>
    <scope>PROTEIN SEQUENCE OF 39-56 AND 153-166</scope>
    <scope>IDENTIFICATION BY MASS SPECTROMETRY</scope>
    <source>
        <tissue>Brain</tissue>
        <tissue>Cajal-Retzius cell</tissue>
    </source>
</reference>
<reference key="14">
    <citation type="submission" date="2001-05" db="EMBL/GenBank/DDBJ databases">
        <title>Identification of immuno-peptidmics that are recognized by tumor-reactive CTL generated from TIL of colon cancer patients.</title>
        <authorList>
            <person name="Shichijo S."/>
            <person name="Itoh K."/>
        </authorList>
    </citation>
    <scope>NUCLEOTIDE SEQUENCE [LARGE SCALE MRNA] OF 65-216</scope>
    <source>
        <tissue>Colon adenocarcinoma</tissue>
    </source>
</reference>
<reference key="15">
    <citation type="journal article" date="1991" name="Proc. Natl. Acad. Sci. U.S.A.">
        <title>Mitotic regulator protein RCC1 is complexed with a nuclear ras-related polypeptide.</title>
        <authorList>
            <person name="Bischoff F.R."/>
            <person name="Ponstingl H."/>
        </authorList>
    </citation>
    <scope>PROTEIN SEQUENCE OF 65-76; 90-125; 128-147 AND 154-216</scope>
    <scope>INTERACTION WITH RCC1</scope>
    <scope>SUBCELLULAR LOCATION</scope>
    <source>
        <tissue>Cervix carcinoma</tissue>
    </source>
</reference>
<reference key="16">
    <citation type="journal article" date="1993" name="J. Cell Biol.">
        <title>Inhibition of nuclear protein import by nonhydrolyzable analogues of GTP and identification of the small GTPase Ran/TC4 as an essential transport factor.</title>
        <authorList>
            <person name="Melchior F."/>
            <person name="Paschal B."/>
            <person name="Evans J."/>
            <person name="Gerace L."/>
        </authorList>
    </citation>
    <scope>FUNCTION</scope>
    <scope>SUBCELLULAR LOCATION</scope>
</reference>
<reference key="17">
    <citation type="journal article" date="1995" name="Biochemistry">
        <title>Interaction of the nuclear GTP-binding protein Ran with its regulatory proteins RCC1 and RanGAP1.</title>
        <authorList>
            <person name="Klebe C."/>
            <person name="Bischoff F.R."/>
            <person name="Ponstingl H."/>
            <person name="Wittinghofer A."/>
        </authorList>
    </citation>
    <scope>FUNCTION</scope>
    <scope>INTERACTION WITH RCC1</scope>
    <scope>MUTAGENESIS OF THR-24 AND GLN-69</scope>
</reference>
<reference key="18">
    <citation type="journal article" date="1995" name="Mol. Cell. Biol.">
        <title>Separate domains of the Ran GTPase interact with different factors to regulate nuclear protein import and RNA processing.</title>
        <authorList>
            <person name="Ren M."/>
            <person name="Villamarin A."/>
            <person name="Shih A."/>
            <person name="Coutavas E."/>
            <person name="Moore M.S."/>
            <person name="Locurcio M."/>
            <person name="Clarke V."/>
            <person name="Oppenheim J.D."/>
            <person name="D'Eustachio P."/>
            <person name="Rush M.G."/>
        </authorList>
    </citation>
    <scope>INTERACTION WITH RANBP1</scope>
    <scope>MUTAGENESIS OF 211-ASP--LEU-216</scope>
</reference>
<reference key="19">
    <citation type="journal article" date="1996" name="EMBO J.">
        <title>Identification of different roles for RanGDP and RanGTP in nuclear protein import.</title>
        <authorList>
            <person name="Goerlich D."/>
            <person name="Pante N."/>
            <person name="Kutay U."/>
            <person name="Aebi U."/>
            <person name="Bischoff F.R."/>
        </authorList>
    </citation>
    <scope>FUNCTION</scope>
    <scope>INTERACTION WITH RANBP1 AND KPNB1</scope>
    <scope>SUBCELLULAR LOCATION</scope>
</reference>
<reference key="20">
    <citation type="journal article" date="1996" name="J. Cell Biol.">
        <title>RAN/TC4 mutants identify a common requirement for snRNP and protein import into the nucleus.</title>
        <authorList>
            <person name="Palacios I."/>
            <person name="Weis K."/>
            <person name="Klebe C."/>
            <person name="Mattaj I.W."/>
            <person name="Dingwall C."/>
        </authorList>
    </citation>
    <scope>FUNCTION</scope>
    <scope>CATALYTIC ACTIVITY</scope>
    <scope>MUTAGENESIS OF THR-24 AND GLN-69</scope>
</reference>
<reference key="21">
    <citation type="journal article" date="1996" name="Proc. Natl. Acad. Sci. U.S.A.">
        <title>Nuclear protein import: Ran-GTP dissociates the karyopherin alphabeta heterodimer by displacing alpha from an overlapping binding site on beta.</title>
        <authorList>
            <person name="Moroianu J."/>
            <person name="Blobel G."/>
            <person name="Radu A."/>
        </authorList>
    </citation>
    <scope>FUNCTION</scope>
</reference>
<reference key="22">
    <citation type="journal article" date="1997" name="Cell">
        <title>CRM1 is an export receptor for leucine-rich nuclear export signals.</title>
        <authorList>
            <person name="Fornerod M."/>
            <person name="Ohno M."/>
            <person name="Yoshida M."/>
            <person name="Mattaj I.W."/>
        </authorList>
    </citation>
    <scope>IDENTIFICATION IN A NUCLEAR EXPORT COMPLEX WITH XPO1</scope>
</reference>
<reference key="23">
    <citation type="journal article" date="1997" name="EMBO J.">
        <title>The asymmetric distribution of the constituents of the Ran system is essential for transport into and out of the nucleus.</title>
        <authorList>
            <person name="Izaurralde E."/>
            <person name="Kutay U."/>
            <person name="von Kobbe C."/>
            <person name="Mattaj I.W."/>
            <person name="Goerlich D."/>
        </authorList>
    </citation>
    <scope>FUNCTION</scope>
    <scope>INTERACTION WITH TNPO1</scope>
    <scope>SUBCELLULAR LOCATION</scope>
    <scope>MUTAGENESIS OF THR-24 AND GLN-69</scope>
</reference>
<reference key="24">
    <citation type="journal article" date="1997" name="FEBS Lett.">
        <title>RanBP1 is crucial for the release of RanGTP from importin beta-related nuclear transport factors.</title>
        <authorList>
            <person name="Bischoff F.R."/>
            <person name="Goerlich D."/>
        </authorList>
    </citation>
    <scope>FUNCTION</scope>
    <scope>INTERACTION WITH RANBP1 AND KPNB1</scope>
    <scope>SUBUNIT</scope>
</reference>
<reference key="25">
    <citation type="journal article" date="1998" name="EMBO J.">
        <title>NTF2 mediates nuclear import of Ran.</title>
        <authorList>
            <person name="Ribbeck K."/>
            <person name="Lipowsky G."/>
            <person name="Kent H.M."/>
            <person name="Stewart M."/>
            <person name="Goerlich D."/>
        </authorList>
    </citation>
    <scope>FUNCTION</scope>
    <scope>INTERACTION WITH NUTF2</scope>
    <scope>SUBCELLULAR LOCATION</scope>
    <scope>MUTAGENESIS OF GLN-69 AND ARG-76</scope>
</reference>
<reference key="26">
    <citation type="journal article" date="1998" name="J. Biol. Chem.">
        <title>The specificity of the CRM1-Rev nuclear export signal interaction is mediated by RanGTP.</title>
        <authorList>
            <person name="Askjaer P."/>
            <person name="Jensen T.H."/>
            <person name="Nilsson J."/>
            <person name="Englmeier L."/>
            <person name="Kjems J."/>
        </authorList>
    </citation>
    <scope>IDENTIFICATION IN A COMPLEX WITH HIV-1 REV; HIV-1 REV RESPONSE ELEMENT AND XPO1 (MICROBIAL INFECTION)</scope>
</reference>
<reference key="27">
    <citation type="journal article" date="1999" name="J. Cell Biol.">
        <title>CRM1-mediated recycling of snurportin 1 to the cytoplasm.</title>
        <authorList>
            <person name="Paraskeva E."/>
            <person name="Izaurralde E."/>
            <person name="Bischoff F.R."/>
            <person name="Huber J."/>
            <person name="Kutay U."/>
            <person name="Hartmann E."/>
            <person name="Luehrmann R."/>
            <person name="Goerlich D."/>
        </authorList>
    </citation>
    <scope>IDENTIFICATION IN A NUCLEAR EXPORT RECEPTOR COMPLEX</scope>
    <scope>IDENTIFICATION IN A TRIMERIC EXPORT COMPLEX WITH SNUPN AND XPO1</scope>
</reference>
<reference key="28">
    <citation type="journal article" date="1999" name="Nature">
        <title>Generation of GTP-bound Ran by RCC1 is required for chromatin-induced mitotic spindle formation.</title>
        <authorList>
            <person name="Carazo-Salas R.E."/>
            <person name="Guarguaglini G."/>
            <person name="Gruss O.J."/>
            <person name="Segref A."/>
            <person name="Karsenti E."/>
            <person name="Mattaj I.W."/>
        </authorList>
    </citation>
    <scope>FUNCTION</scope>
    <scope>MUTAGENESIS OF THR-24 AND GLN-69</scope>
</reference>
<reference key="29">
    <citation type="journal article" date="2000" name="Mol. Biol. Cell">
        <title>Monoclonal antibodies to NTF2 inhibit nuclear protein import by preventing nuclear translocation of the GTPase Ran.</title>
        <authorList>
            <person name="Steggerda S.M."/>
            <person name="Black B.E."/>
            <person name="Paschal B.M."/>
        </authorList>
    </citation>
    <scope>INTERACTION WITH NUTF2</scope>
    <scope>SUBCELLULAR LOCATION</scope>
</reference>
<reference key="30">
    <citation type="journal article" date="2001" name="EMBO Rep.">
        <title>RanBP3 influences interactions between CRM1 and its nuclear protein export substrates.</title>
        <authorList>
            <person name="Englmeier L."/>
            <person name="Fornerod M."/>
            <person name="Bischoff F.R."/>
            <person name="Petosa C."/>
            <person name="Mattaj I.W."/>
            <person name="Kutay U."/>
        </authorList>
    </citation>
    <scope>IDENTIFICATION IN A NUCLEAR EXPORT COMPLEX WITH RANBP3 AND XPO1</scope>
</reference>
<reference key="31">
    <citation type="journal article" date="2001" name="J. Cell Biol.">
        <title>Ran-binding protein 3 is a cofactor for Crm1-mediated nuclear protein export.</title>
        <authorList>
            <person name="Lindsay M.E."/>
            <person name="Holaska J.M."/>
            <person name="Welch K."/>
            <person name="Paschal B.M."/>
            <person name="Macara I.G."/>
        </authorList>
    </citation>
    <scope>IDENTIFICATION IN A NUCLEAR EXPORT COMPLEX WITH RANBP3 AND XPO1</scope>
</reference>
<reference key="32">
    <citation type="journal article" date="2003" name="J. Biol. Chem.">
        <title>Serine/threonine kinase Mirk/Dyrk1B is an inhibitor of epithelial cell migration and is negatively regulated by the Met adaptor Ran-binding protein M.</title>
        <authorList>
            <person name="Zou Y."/>
            <person name="Lim S."/>
            <person name="Lee K."/>
            <person name="Deng X."/>
            <person name="Friedman E."/>
        </authorList>
    </citation>
    <scope>IDENTIFICATION IN A COMPLEX WITH COPS5; RANBP9 AND DYRK1B</scope>
</reference>
<reference key="33">
    <citation type="journal article" date="2002" name="Curr. Biol.">
        <title>Targeting of RCC1 to chromosomes is required for proper mitotic spindle assembly in human cells.</title>
        <authorList>
            <person name="Moore W."/>
            <person name="Zhang C."/>
            <person name="Clarke P.R."/>
        </authorList>
    </citation>
    <scope>INTERACTION WITH RCC1</scope>
    <scope>FUNCTION</scope>
    <scope>SUBCELLULAR LOCATION</scope>
    <scope>MUTAGENESIS OF THR-24 AND GLN-69</scope>
</reference>
<reference key="34">
    <citation type="journal article" date="2003" name="Mol. Cell. Biol.">
        <title>Hydrogen peroxide triggers nuclear export of telomerase reverse transcriptase via Src kinase family-dependent phosphorylation of tyrosine 707.</title>
        <authorList>
            <person name="Haendeler J."/>
            <person name="Hoffmann J."/>
            <person name="Brandes R.P."/>
            <person name="Zeiher A.M."/>
            <person name="Dimmeler S."/>
        </authorList>
    </citation>
    <scope>INTERACTION WITH TERT</scope>
</reference>
<reference key="35">
    <citation type="journal article" date="2003" name="Mol. Cell. Biol.">
        <title>A multifunctional domain in human CRM1 (exportin 1) mediates RanBP3 binding and multimerization of human T-cell leukemia virus type 1 Rex protein.</title>
        <authorList>
            <person name="Hakata Y."/>
            <person name="Yamada M."/>
            <person name="Shida H."/>
        </authorList>
    </citation>
    <scope>IDENTIFICATION IN A COMPLEX WITH HTLV-1 REX; RANBP3 AND XPO1 (MICROBIAL INFECTION)</scope>
</reference>
<reference key="36">
    <citation type="journal article" date="2003" name="Nature">
        <title>Proteomic characterization of the human centrosome by protein correlation profiling.</title>
        <authorList>
            <person name="Andersen J.S."/>
            <person name="Wilkinson C.J."/>
            <person name="Mayor T."/>
            <person name="Mortensen P."/>
            <person name="Nigg E.A."/>
            <person name="Mann M."/>
        </authorList>
    </citation>
    <scope>IDENTIFICATION BY MASS SPECTROMETRY</scope>
    <source>
        <tissue>Lymphoblast</tissue>
    </source>
</reference>
<reference key="37">
    <citation type="journal article" date="2004" name="Biochem. Biophys. Res. Commun.">
        <title>A novel MET-interacting protein shares high sequence similarity with RanBPM, but fails to stimulate MET-induced Ras/Erk signaling.</title>
        <authorList>
            <person name="Wang D."/>
            <person name="Li Z."/>
            <person name="Schoen S.R."/>
            <person name="Messing E.M."/>
            <person name="Wu G."/>
        </authorList>
    </citation>
    <scope>INTERACTION WITH RANBP9 AND RANBP10</scope>
</reference>
<reference key="38">
    <citation type="journal article" date="2004" name="Mol. Cell">
        <title>Architecture of CRM1/Exportin1 suggests how cooperativity is achieved during formation of a nuclear export complex.</title>
        <authorList>
            <person name="Petosa C."/>
            <person name="Schoehn G."/>
            <person name="Askjaer P."/>
            <person name="Bauer U."/>
            <person name="Moulin M."/>
            <person name="Steuerwald U."/>
            <person name="Soler-Lopez M."/>
            <person name="Baudin F."/>
            <person name="Mattaj I.W."/>
            <person name="Mueller C.W."/>
        </authorList>
    </citation>
    <scope>IDENTIFICATION IN A NUCLEAR EXPORT COMPLEX WITH XPO1</scope>
</reference>
<reference key="39">
    <citation type="journal article" date="2005" name="Cell Struct. Funct.">
        <title>Phosphorylation of RanGAP1 stabilizes its interaction with Ran and RanBP1.</title>
        <authorList>
            <person name="Takeda E."/>
            <person name="Hieda M."/>
            <person name="Katahira J."/>
            <person name="Yoneda Y."/>
        </authorList>
    </citation>
    <scope>IDENTIFICATION IN A COMPLEX WITH RANBP1 AND RANGAP1</scope>
</reference>
<reference key="40">
    <citation type="journal article" date="2006" name="J. Proteome Res.">
        <title>Proteomic and bioinformatic characterization of the biogenesis and function of melanosomes.</title>
        <authorList>
            <person name="Chi A."/>
            <person name="Valencia J.C."/>
            <person name="Hu Z.-Z."/>
            <person name="Watabe H."/>
            <person name="Yamaguchi H."/>
            <person name="Mangini N.J."/>
            <person name="Huang H."/>
            <person name="Canfield V.A."/>
            <person name="Cheng K.C."/>
            <person name="Yang F."/>
            <person name="Abe R."/>
            <person name="Yamagishi S."/>
            <person name="Shabanowitz J."/>
            <person name="Hearing V.J."/>
            <person name="Wu C."/>
            <person name="Appella E."/>
            <person name="Hunt D.F."/>
        </authorList>
    </citation>
    <scope>SUBCELLULAR LOCATION [LARGE SCALE ANALYSIS]</scope>
    <source>
        <tissue>Melanoma</tissue>
    </source>
</reference>
<reference key="41">
    <citation type="journal article" date="2007" name="J. Biol. Chem.">
        <title>Human DNA replication-related element binding factor (hDREF) self-association via hATC domain is necessary for its nuclear accumulation and DNA binding.</title>
        <authorList>
            <person name="Yamashita D."/>
            <person name="Komori H."/>
            <person name="Higuchi Y."/>
            <person name="Yamaguchi T."/>
            <person name="Osumi T."/>
            <person name="Hirose F."/>
        </authorList>
    </citation>
    <scope>FUNCTION</scope>
    <scope>MUTAGENESIS OF GLN-69</scope>
</reference>
<reference key="42">
    <citation type="journal article" date="2008" name="Mol. Cell. Biol.">
        <title>A survivin-ran complex regulates spindle formation in tumor cells.</title>
        <authorList>
            <person name="Xia F."/>
            <person name="Canovas P.M."/>
            <person name="Guadagno T.M."/>
            <person name="Altieri D.C."/>
        </authorList>
    </citation>
    <scope>FUNCTION</scope>
    <scope>INTERACTION WITH BIRC5</scope>
    <scope>MUTAGENESIS OF THR-24 AND GLN-69</scope>
</reference>
<reference key="43">
    <citation type="journal article" date="2008" name="Mol. Cell. Proteomics">
        <title>Proteomics identification of nuclear Ran GTPase as an inhibitor of human VRK1 and VRK2 (vaccinia-related kinase) activities.</title>
        <authorList>
            <person name="Sanz-Garcia M."/>
            <person name="Lopez-Sanchez I."/>
            <person name="Lazo P.A."/>
        </authorList>
    </citation>
    <scope>FUNCTION</scope>
    <scope>SUBCELLULAR LOCATION</scope>
    <scope>INTERACTION WITH VRK1; VRK2 AND VRK3</scope>
</reference>
<reference key="44">
    <citation type="journal article" date="2008" name="Traffic">
        <title>A new role for nuclear transport factor 2 and Ran: nuclear import of CapG.</title>
        <authorList>
            <person name="Van Impe K."/>
            <person name="Hubert T."/>
            <person name="De Corte V."/>
            <person name="Vanloo B."/>
            <person name="Boucherie C."/>
            <person name="Vandekerckhove J."/>
            <person name="Gettemans J."/>
        </authorList>
    </citation>
    <scope>INTERACTION WITH CAPG AND NUTF2</scope>
</reference>
<reference key="45">
    <citation type="journal article" date="2009" name="Anal. Chem.">
        <title>Lys-N and trypsin cover complementary parts of the phosphoproteome in a refined SCX-based approach.</title>
        <authorList>
            <person name="Gauci S."/>
            <person name="Helbig A.O."/>
            <person name="Slijper M."/>
            <person name="Krijgsveld J."/>
            <person name="Heck A.J."/>
            <person name="Mohammed S."/>
        </authorList>
    </citation>
    <scope>ACETYLATION [LARGE SCALE ANALYSIS] AT ALA-2</scope>
    <scope>CLEAVAGE OF INITIATOR METHIONINE [LARGE SCALE ANALYSIS]</scope>
    <scope>IDENTIFICATION BY MASS SPECTROMETRY [LARGE SCALE ANALYSIS]</scope>
</reference>
<reference key="46">
    <citation type="journal article" date="2009" name="PLoS ONE">
        <title>The mitotic arrest deficient protein MAD2B interacts with the small GTPase RAN throughout the cell cycle.</title>
        <authorList>
            <person name="Medendorp K."/>
            <person name="van Groningen J.J."/>
            <person name="Vreede L."/>
            <person name="Hetterschijt L."/>
            <person name="van den Hurk W.H."/>
            <person name="de Bruijn D.R."/>
            <person name="Brugmans L."/>
            <person name="van Kessel A.G."/>
        </authorList>
    </citation>
    <scope>INTERACTION WITH MAD2L2</scope>
    <scope>SUBCELLULAR LOCATION</scope>
</reference>
<reference key="47">
    <citation type="journal article" date="2009" name="Science">
        <title>Lysine acetylation targets protein complexes and co-regulates major cellular functions.</title>
        <authorList>
            <person name="Choudhary C."/>
            <person name="Kumar C."/>
            <person name="Gnad F."/>
            <person name="Nielsen M.L."/>
            <person name="Rehman M."/>
            <person name="Walther T.C."/>
            <person name="Olsen J.V."/>
            <person name="Mann M."/>
        </authorList>
    </citation>
    <scope>ACETYLATION [LARGE SCALE ANALYSIS] AT LYS-60; LYS-71; LYS-99 AND LYS-159</scope>
    <scope>IDENTIFICATION BY MASS SPECTROMETRY [LARGE SCALE ANALYSIS]</scope>
</reference>
<reference key="48">
    <citation type="journal article" date="2010" name="EMBO J.">
        <title>An allosteric mechanism to displace nuclear export cargo from CRM1 and RanGTP by RanBP1.</title>
        <authorList>
            <person name="Koyama M."/>
            <person name="Matsuura Y."/>
        </authorList>
    </citation>
    <scope>FUNCTION</scope>
    <scope>SUBUNIT</scope>
</reference>
<reference key="49">
    <citation type="journal article" date="2011" name="BMC Syst. Biol.">
        <title>Initial characterization of the human central proteome.</title>
        <authorList>
            <person name="Burkard T.R."/>
            <person name="Planyavsky M."/>
            <person name="Kaupe I."/>
            <person name="Breitwieser F.P."/>
            <person name="Buerckstuemmer T."/>
            <person name="Bennett K.L."/>
            <person name="Superti-Furga G."/>
            <person name="Colinge J."/>
        </authorList>
    </citation>
    <scope>IDENTIFICATION BY MASS SPECTROMETRY [LARGE SCALE ANALYSIS]</scope>
</reference>
<reference key="50">
    <citation type="journal article" date="2012" name="Mol. Cell. Proteomics">
        <title>Comparative large-scale characterisation of plant vs. mammal proteins reveals similar and idiosyncratic N-alpha acetylation features.</title>
        <authorList>
            <person name="Bienvenut W.V."/>
            <person name="Sumpton D."/>
            <person name="Martinez A."/>
            <person name="Lilla S."/>
            <person name="Espagne C."/>
            <person name="Meinnel T."/>
            <person name="Giglione C."/>
        </authorList>
    </citation>
    <scope>ACETYLATION [LARGE SCALE ANALYSIS] AT ALA-2</scope>
    <scope>CLEAVAGE OF INITIATOR METHIONINE [LARGE SCALE ANALYSIS]</scope>
    <scope>IDENTIFICATION BY MASS SPECTROMETRY [LARGE SCALE ANALYSIS]</scope>
</reference>
<reference key="51">
    <citation type="journal article" date="2012" name="Proc. Natl. Acad. Sci. U.S.A.">
        <title>N-terminal acetylome analyses and functional insights of the N-terminal acetyltransferase NatB.</title>
        <authorList>
            <person name="Van Damme P."/>
            <person name="Lasa M."/>
            <person name="Polevoda B."/>
            <person name="Gazquez C."/>
            <person name="Elosegui-Artola A."/>
            <person name="Kim D.S."/>
            <person name="De Juan-Pardo E."/>
            <person name="Demeyer K."/>
            <person name="Hole K."/>
            <person name="Larrea E."/>
            <person name="Timmerman E."/>
            <person name="Prieto J."/>
            <person name="Arnesen T."/>
            <person name="Sherman F."/>
            <person name="Gevaert K."/>
            <person name="Aldabe R."/>
        </authorList>
    </citation>
    <scope>ACETYLATION [LARGE SCALE ANALYSIS] AT ALA-2</scope>
    <scope>CLEAVAGE OF INITIATOR METHIONINE [LARGE SCALE ANALYSIS]</scope>
    <scope>IDENTIFICATION BY MASS SPECTROMETRY [LARGE SCALE ANALYSIS]</scope>
</reference>
<reference key="52">
    <citation type="journal article" date="2013" name="J. Biol. Chem.">
        <title>Interaction of transportin-SR2 with Ras-related nuclear protein (Ran) GTPase.</title>
        <authorList>
            <person name="Taltynov O."/>
            <person name="Demeulemeester J."/>
            <person name="Christ F."/>
            <person name="De Houwer S."/>
            <person name="Tsirkone V.G."/>
            <person name="Gerard M."/>
            <person name="Weeks S.D."/>
            <person name="Strelkov S.V."/>
            <person name="Debyser Z."/>
        </authorList>
    </citation>
    <scope>INTERACTION WITH TNPO3</scope>
    <scope>MUTAGENESIS OF GLN-69</scope>
</reference>
<reference key="53">
    <citation type="journal article" date="2013" name="J. Proteome Res.">
        <title>Toward a comprehensive characterization of a human cancer cell phosphoproteome.</title>
        <authorList>
            <person name="Zhou H."/>
            <person name="Di Palma S."/>
            <person name="Preisinger C."/>
            <person name="Peng M."/>
            <person name="Polat A.N."/>
            <person name="Heck A.J."/>
            <person name="Mohammed S."/>
        </authorList>
    </citation>
    <scope>PHOSPHORYLATION [LARGE SCALE ANALYSIS] AT THR-24</scope>
    <scope>IDENTIFICATION BY MASS SPECTROMETRY [LARGE SCALE ANALYSIS]</scope>
    <source>
        <tissue>Erythroleukemia</tissue>
    </source>
</reference>
<reference key="54">
    <citation type="journal article" date="2014" name="J. Proteomics">
        <title>An enzyme assisted RP-RPLC approach for in-depth analysis of human liver phosphoproteome.</title>
        <authorList>
            <person name="Bian Y."/>
            <person name="Song C."/>
            <person name="Cheng K."/>
            <person name="Dong M."/>
            <person name="Wang F."/>
            <person name="Huang J."/>
            <person name="Sun D."/>
            <person name="Wang L."/>
            <person name="Ye M."/>
            <person name="Zou H."/>
        </authorList>
    </citation>
    <scope>IDENTIFICATION BY MASS SPECTROMETRY [LARGE SCALE ANALYSIS]</scope>
    <source>
        <tissue>Liver</tissue>
    </source>
</reference>
<reference key="55">
    <citation type="journal article" date="2014" name="Proc. Natl. Acad. Sci. U.S.A.">
        <title>Solution structures of Mengovirus Leader protein, its phosphorylated derivatives, and in complex with nuclear transport regulatory protein, RanGTPase.</title>
        <authorList>
            <person name="Bacot-Davis V.R."/>
            <person name="Ciomperlik J.J."/>
            <person name="Basta H.A."/>
            <person name="Cornilescu C.C."/>
            <person name="Palmenberg A.C."/>
        </authorList>
    </citation>
    <scope>INTERACTION WITH MENGO ENCEPHALOMYOCARDITIS VIRUS LEADER PROTEIN (MICROBIAL INFECTION)</scope>
</reference>
<reference key="56">
    <citation type="journal article" date="2015" name="J. Biol. Chem.">
        <title>MYCBP2 is a guanosine exchange factor for Ran protein and determines its localization in neurons of dorsal root ganglia.</title>
        <authorList>
            <person name="Doerr A."/>
            <person name="Pierre S."/>
            <person name="Zhang D.D."/>
            <person name="Henke M."/>
            <person name="Holland S."/>
            <person name="Scholich K."/>
        </authorList>
    </citation>
    <scope>INTERACTION WITH MYCBP2</scope>
</reference>
<reference key="57">
    <citation type="journal article" date="2015" name="Proteomics">
        <title>N-terminome analysis of the human mitochondrial proteome.</title>
        <authorList>
            <person name="Vaca Jacome A.S."/>
            <person name="Rabilloud T."/>
            <person name="Schaeffer-Reiss C."/>
            <person name="Rompais M."/>
            <person name="Ayoub D."/>
            <person name="Lane L."/>
            <person name="Bairoch A."/>
            <person name="Van Dorsselaer A."/>
            <person name="Carapito C."/>
        </authorList>
    </citation>
    <scope>IDENTIFICATION BY MASS SPECTROMETRY [LARGE SCALE ANALYSIS]</scope>
</reference>
<reference key="58">
    <citation type="journal article" date="2017" name="Nat. Struct. Mol. Biol.">
        <title>Site-specific mapping of the human SUMO proteome reveals co-modification with phosphorylation.</title>
        <authorList>
            <person name="Hendriks I.A."/>
            <person name="Lyon D."/>
            <person name="Young C."/>
            <person name="Jensen L.J."/>
            <person name="Vertegaal A.C."/>
            <person name="Nielsen M.L."/>
        </authorList>
    </citation>
    <scope>SUMOYLATION [LARGE SCALE ANALYSIS] AT LYS-71 AND LYS-152</scope>
    <scope>IDENTIFICATION BY MASS SPECTROMETRY [LARGE SCALE ANALYSIS]</scope>
</reference>
<reference key="59">
    <citation type="journal article" date="2018" name="Autophagy">
        <title>The Vici syndrome protein EPG5 regulates intracellular nucleic acid trafficking linking autophagy to innate and adaptive immunity.</title>
        <authorList>
            <person name="Piano Mortari E."/>
            <person name="Folgiero V."/>
            <person name="Marcellini V."/>
            <person name="Romania P."/>
            <person name="Bellacchio E."/>
            <person name="D'Alicandro V."/>
            <person name="Bocci C."/>
            <person name="Carrozzo R."/>
            <person name="Martinelli D."/>
            <person name="Petrini S."/>
            <person name="Axiotis E."/>
            <person name="Farroni C."/>
            <person name="Locatelli F."/>
            <person name="Schara U."/>
            <person name="Pilz D.T."/>
            <person name="Jungbluth H."/>
            <person name="Dionisi-Vici C."/>
            <person name="Carsetti R."/>
        </authorList>
    </citation>
    <scope>INTERACTION WITH EPG5</scope>
</reference>
<reference key="60">
    <citation type="journal article" date="2018" name="J. Mol. Cell Biol.">
        <title>Mitosis-specific acetylation tunes Ran effector binding for chromosome segregation.</title>
        <authorList>
            <person name="Bao X."/>
            <person name="Liu H."/>
            <person name="Liu X."/>
            <person name="Ruan K."/>
            <person name="Zhang Y."/>
            <person name="Zhang Z."/>
            <person name="Hu Q."/>
            <person name="Liu Y."/>
            <person name="Akram S."/>
            <person name="Zhang J."/>
            <person name="Gong Q."/>
            <person name="Wang W."/>
            <person name="Yuan X."/>
            <person name="Li J."/>
            <person name="Zhao L."/>
            <person name="Dou Z."/>
            <person name="Tian R."/>
            <person name="Yao X."/>
            <person name="Wu J."/>
            <person name="Shi Y."/>
        </authorList>
    </citation>
    <scope>FUNCTION</scope>
    <scope>INTERACTION WITH RANGRF AND RCC1</scope>
    <scope>ACETYLATION AT LYS-134</scope>
    <scope>IDENTIFICATION BY MASS SPECTROMETRY</scope>
    <scope>MUTAGENESIS OF LYS-134</scope>
</reference>
<reference key="61">
    <citation type="journal article" date="2019" name="Biochim. Biophys. Acta">
        <title>SIRT7 regulates the nuclear export of NF-kappaB p65 by deacetylating Ran.</title>
        <authorList>
            <person name="Sobuz S.U."/>
            <person name="Sato Y."/>
            <person name="Yoshizawa T."/>
            <person name="Karim F."/>
            <person name="Ono K."/>
            <person name="Sawa T."/>
            <person name="Miyamoto Y."/>
            <person name="Oka M."/>
            <person name="Yamagata K."/>
        </authorList>
    </citation>
    <scope>ACETYLATION AT LYS-37</scope>
    <scope>DEACETYLATION</scope>
    <scope>SUBCELLULAR LOCATION</scope>
    <scope>MUTAGENESIS OF LYS-37</scope>
</reference>
<reference key="62">
    <citation type="journal article" date="1995" name="Nature">
        <title>Crystal structure of the nuclear Ras-related protein Ran in its GDP-bound form.</title>
        <authorList>
            <person name="Scheffzek K."/>
            <person name="Klebe C."/>
            <person name="Fritz-Wolf K."/>
            <person name="Kabsch W."/>
            <person name="Wittinghofer A."/>
        </authorList>
    </citation>
    <scope>X-RAY CRYSTALLOGRAPHY (2.3 ANGSTROMS) IN COMPLEX WITH GDP</scope>
</reference>
<reference evidence="66" key="63">
    <citation type="journal article" date="1999" name="Cell">
        <title>Structural view of the Ran-Importin beta interaction at 2.3 A resolution.</title>
        <authorList>
            <person name="Vetter I.R."/>
            <person name="Arndt A."/>
            <person name="Kutay U."/>
            <person name="Goerlich D."/>
            <person name="Wittinghofer A."/>
        </authorList>
    </citation>
    <scope>X-RAY CRYSTALLOGRAPHY (2.30 ANGSTROMS) IN COMPLEX WITH GTP ANALOG AND KPNB1</scope>
</reference>
<reference evidence="69" key="64">
    <citation type="journal article" date="1999" name="Nature">
        <title>Structure of the nuclear transport complex karyopherin-beta2-Ran x GppNHp.</title>
        <authorList>
            <person name="Chook Y.M."/>
            <person name="Blobel G."/>
        </authorList>
    </citation>
    <scope>X-RAY CRYSTALLOGRAPHY (3.0 ANGSTROMS) IN COMPLEX WITH GTP ANALOG AND KPNB2</scope>
</reference>
<reference key="65">
    <citation type="journal article" date="1999" name="Nature">
        <title>Structure of a Ran-binding domain complexed with Ran bound to a GTP analogue: implications for nuclear transport.</title>
        <authorList>
            <person name="Vetter I.R."/>
            <person name="Nowak C."/>
            <person name="Nishimoto T."/>
            <person name="Kuhlmann J."/>
            <person name="Wittinghofer A."/>
        </authorList>
    </citation>
    <scope>X-RAY CRYSTALLOGRAPHY (2.96 ANGSTROMS) IN COMPLEX WITH GTP ANALOG AND RANBP2</scope>
</reference>
<reference evidence="65" key="66">
    <citation type="journal article" date="2001" name="Cell">
        <title>Structural basis for guanine nucleotide exchange on Ran by the regulator of chromosome condensation (RCC1).</title>
        <authorList>
            <person name="Renault L."/>
            <person name="Kuhlmann J."/>
            <person name="Henkel A."/>
            <person name="Wittinghofer A."/>
        </authorList>
    </citation>
    <scope>X-RAY CRYSTALLOGRAPHY (1.76 ANGSTROMS) IN COMPLEX WITH RCC1</scope>
    <scope>FUNCTION</scope>
    <scope>INTERACTION WITH RCC1</scope>
    <scope>MUTAGENESIS OF GLU-70</scope>
</reference>
<reference evidence="67 68" key="67">
    <citation type="journal article" date="2002" name="Nature">
        <title>RanGAP mediates GTP hydrolysis without an arginine finger.</title>
        <authorList>
            <person name="Seewald M.J."/>
            <person name="Korner C."/>
            <person name="Wittinghofer A."/>
            <person name="Vetter I.R."/>
        </authorList>
    </citation>
    <scope>X-RAY CRYSTALLOGRAPHY (2.70 ANGSTROMS) IN COMPLEXES WITH GTP ANALOGS; RANBP1 AND FISSION YEAST RANGAP1</scope>
</reference>
<reference evidence="71" key="68">
    <citation type="journal article" date="2008" name="Structure">
        <title>The crystal structure of the Ran-Nup153ZnF2 complex: a general Ran docking site at the nuclear pore complex.</title>
        <authorList>
            <person name="Schrader N."/>
            <person name="Koerner C."/>
            <person name="Koessmeier K."/>
            <person name="Bangert J.A."/>
            <person name="Wittinghofer A."/>
            <person name="Stoll R."/>
            <person name="Vetter I.R."/>
        </authorList>
    </citation>
    <scope>X-RAY CRYSTALLOGRAPHY (2.10 ANGSTROMS) IN COMPLEX WITH GDP ANALOG AND NUP153</scope>
</reference>
<reference evidence="72 73 74 75 76 77 78" key="69">
    <citation type="journal article" date="2009" name="J. Mol. Biol.">
        <title>Crystallographic and biochemical analysis of the Ran-binding zinc finger domain.</title>
        <authorList>
            <person name="Partridge J.R."/>
            <person name="Schwartz T.U."/>
        </authorList>
    </citation>
    <scope>X-RAY CRYSTALLOGRAPHY (1.48 ANGSTROMS) OF 2-216 IN COMPLEX WITH GDP ANALOG AND NUP153</scope>
</reference>
<reference evidence="79" key="70">
    <citation type="journal article" date="2009" name="Science">
        <title>Crystal structure of the nuclear export receptor CRM1 in complex with Snurportin1 and RanGTP.</title>
        <authorList>
            <person name="Monecke T."/>
            <person name="Guttler T."/>
            <person name="Neumann P."/>
            <person name="Dickmanns A."/>
            <person name="Gorlich D."/>
            <person name="Ficner R."/>
        </authorList>
    </citation>
    <scope>X-RAY CRYSTALLOGRAPHY (2.50 ANGSTROMS) IN COMPLEX WITH GTP; XPO1 AND SNUPN</scope>
    <scope>IDENTIFICATION IN A COMPLEX WITH XPO1 AND SNUPN</scope>
</reference>
<reference evidence="86" key="71">
    <citation type="journal article" date="2014" name="Acta Crystallogr. F">
        <title>Structure of transportin SR2, a karyopherin involved in human disease, in complex with Ran.</title>
        <authorList>
            <person name="Tsirkone V.G."/>
            <person name="Beutels K.G."/>
            <person name="Demeulemeester J."/>
            <person name="Debyser Z."/>
            <person name="Christ F."/>
            <person name="Strelkov S.V."/>
        </authorList>
    </citation>
    <scope>X-RAY CRYSTALLOGRAPHY (2.90 ANGSTROMS) OF MUTANT ASN-69 IN COMPLEX WITH GTP AND TNPO3</scope>
    <scope>MUTAGENESIS OF GLN-69</scope>
</reference>
<reference evidence="85" key="72">
    <citation type="journal article" date="2014" name="Proc. Natl. Acad. Sci. U.S.A.">
        <title>Structural basis for nuclear import of splicing factors by human Transportin 3.</title>
        <authorList>
            <person name="Maertens G.N."/>
            <person name="Cook N.J."/>
            <person name="Wang W."/>
            <person name="Hare S."/>
            <person name="Gupta S.S."/>
            <person name="Oztop I."/>
            <person name="Lee K."/>
            <person name="Pye V.E."/>
            <person name="Cosnefroy O."/>
            <person name="Snijders A.P."/>
            <person name="KewalRamani V.N."/>
            <person name="Fassati A."/>
            <person name="Engelman A."/>
            <person name="Cherepanov P."/>
        </authorList>
    </citation>
    <scope>X-RAY CRYSTALLOGRAPHY (3.42 ANGSTROMS) OF 2-216 IN COMPLEX WITH GTP AND TNPO3</scope>
</reference>
<reference evidence="93 94 95 96 97" key="73">
    <citation type="journal article" date="2015" name="Elife">
        <title>Structural determinants of nuclear export signal orientation in binding to exportin CRM1.</title>
        <authorList>
            <person name="Fung H.Y."/>
            <person name="Fu S.C."/>
            <person name="Brautigam C.A."/>
            <person name="Chook Y.M."/>
        </authorList>
    </citation>
    <scope>X-RAY CRYSTALLOGRAPHY (2.09 ANGSTROMS) IN COMPLEX WITH GTP ANALOG; CPEB4 NUCLEAR EXPORT SIGNAL AND YEAST HOMOLOGS OF XPO1 AND RANGAP1</scope>
</reference>
<reference evidence="87 88 89 90 91 92" key="74">
    <citation type="journal article" date="2015" name="J. Biol. Chem.">
        <title>Catalysis of GTP hydrolysis by small GTPases at atomic detail by integration of X-ray crystallography, experimental, and theoretical IR spectroscopy.</title>
        <authorList>
            <person name="Rudack T."/>
            <person name="Jenrich S."/>
            <person name="Brucker S."/>
            <person name="Vetter I.R."/>
            <person name="Gerwert K."/>
            <person name="Kotting C."/>
        </authorList>
    </citation>
    <scope>X-RAY CRYSTALLOGRAPHY (1.65 ANGSTROMS) IN COMPLEXES WITH GTP ANALOGS AND RANBP2</scope>
    <scope>FUNCTION</scope>
    <scope>CATALYTIC ACTIVITY</scope>
    <scope>INTERACTION WITH RANBP2</scope>
    <scope>COFACTOR</scope>
    <scope>MUTAGENESIS OF THR-25 AND TYR-39</scope>
</reference>
<reference evidence="99" key="75">
    <citation type="journal article" date="2016" name="Nat. Commun.">
        <title>Structure of the exportin Xpo4 in complex with RanGTP and the hypusine-containing translation factor eIF5A.</title>
        <authorList>
            <person name="Aksu M."/>
            <person name="Trakhanov S."/>
            <person name="Goerlich D."/>
        </authorList>
    </citation>
    <scope>X-RAY CRYSTALLOGRAPHY (3.20 ANGSTROMS) OF 5-180 IN COMPLEX WITH XPO4 AND EIF5A</scope>
    <scope>FUNCTION</scope>
</reference>
<reference evidence="101 102 103 104 105 106 107 108 109 110 111" key="76">
    <citation type="journal article" date="2017" name="Elife">
        <title>Nuclear export receptor CRM1 recognizes diverse conformations in nuclear export signals.</title>
        <authorList>
            <person name="Fung H.Y."/>
            <person name="Fu S.C."/>
            <person name="Chook Y.M."/>
        </authorList>
    </citation>
    <scope>X-RAY CRYSTALLOGRAPHY (2.05 ANGSTROMS) IN COMPLEX WITH GTP ANALOG AND THE YEAST HOMOLOGS OF XPO1 AND RANGAP1</scope>
</reference>
<accession>P62826</accession>
<accession>A8K3Z8</accession>
<accession>P17080</accession>
<accession>P28746</accession>
<accession>P28747</accession>
<accession>Q6IPB2</accession>
<accession>Q86V08</accession>
<accession>Q8NI90</accession>
<accession>Q9CSP3</accession>
<accession>Q9CWI7</accession>
<accession>Q9CZA2</accession>
<accession>Q9UDJ5</accession>
<accession>Q9UEU9</accession>
<sequence length="216" mass="24423">MAAQGEPQVQFKLVLVGDGGTGKTTFVKRHLTGEFEKKYVATLGVEVHPLVFHTNRGPIKFNVWDTAGQEKFGGLRDGYYIQAQCAIIMFDVTSRVTYKNVPNWHRDLVRVCENIPIVLCGNKVDIKDRKVKAKSIVFHRKKNLQYYDISAKSNYNFEKPFLWLARKLIGDPNLEFVAMPALAPPEVVMDPALAAQYEHDLEVAQTTALPDEDDDL</sequence>
<protein>
    <recommendedName>
        <fullName>GTP-binding nuclear protein Ran</fullName>
        <ecNumber evidence="37 50">3.6.5.-</ecNumber>
    </recommendedName>
    <alternativeName>
        <fullName evidence="59">Androgen receptor-associated protein 24</fullName>
    </alternativeName>
    <alternativeName>
        <fullName>GTPase Ran</fullName>
    </alternativeName>
    <alternativeName>
        <fullName evidence="60 61 62">Ras-like protein TC4</fullName>
    </alternativeName>
    <alternativeName>
        <fullName>Ras-related nuclear protein</fullName>
    </alternativeName>
</protein>
<dbReference type="EC" id="3.6.5.-" evidence="37 50"/>
<dbReference type="EMBL" id="M31469">
    <property type="protein sequence ID" value="AAA36546.1"/>
    <property type="molecule type" value="mRNA"/>
</dbReference>
<dbReference type="EMBL" id="AF052578">
    <property type="protein sequence ID" value="AAC05840.1"/>
    <property type="molecule type" value="mRNA"/>
</dbReference>
<dbReference type="EMBL" id="AF054183">
    <property type="protein sequence ID" value="AAC99400.1"/>
    <property type="molecule type" value="mRNA"/>
</dbReference>
<dbReference type="EMBL" id="AF501887">
    <property type="protein sequence ID" value="AAM15923.1"/>
    <property type="molecule type" value="mRNA"/>
</dbReference>
<dbReference type="EMBL" id="BT007271">
    <property type="protein sequence ID" value="AAP35935.1"/>
    <property type="molecule type" value="mRNA"/>
</dbReference>
<dbReference type="EMBL" id="CR450347">
    <property type="protein sequence ID" value="CAG29343.1"/>
    <property type="molecule type" value="mRNA"/>
</dbReference>
<dbReference type="EMBL" id="AK290763">
    <property type="protein sequence ID" value="BAF83452.1"/>
    <property type="molecule type" value="mRNA"/>
</dbReference>
<dbReference type="EMBL" id="AK312466">
    <property type="protein sequence ID" value="BAG35373.1"/>
    <property type="molecule type" value="mRNA"/>
</dbReference>
<dbReference type="EMBL" id="CH471054">
    <property type="protein sequence ID" value="EAW98516.1"/>
    <property type="molecule type" value="Genomic_DNA"/>
</dbReference>
<dbReference type="EMBL" id="BC004272">
    <property type="protein sequence ID" value="AAH04272.3"/>
    <property type="molecule type" value="mRNA"/>
</dbReference>
<dbReference type="EMBL" id="BC014518">
    <property type="protein sequence ID" value="AAH14518.1"/>
    <property type="molecule type" value="mRNA"/>
</dbReference>
<dbReference type="EMBL" id="BC014901">
    <property type="protein sequence ID" value="AAH14901.1"/>
    <property type="molecule type" value="mRNA"/>
</dbReference>
<dbReference type="EMBL" id="BC016654">
    <property type="protein sequence ID" value="AAH16654.1"/>
    <property type="molecule type" value="mRNA"/>
</dbReference>
<dbReference type="EMBL" id="BC051908">
    <property type="protein sequence ID" value="AAH51908.2"/>
    <property type="molecule type" value="mRNA"/>
</dbReference>
<dbReference type="EMBL" id="BC072000">
    <property type="protein sequence ID" value="AAH72000.1"/>
    <property type="molecule type" value="mRNA"/>
</dbReference>
<dbReference type="EMBL" id="AB062399">
    <property type="protein sequence ID" value="BAB93486.1"/>
    <property type="status" value="ALT_INIT"/>
    <property type="molecule type" value="mRNA"/>
</dbReference>
<dbReference type="CCDS" id="CCDS9271.1"/>
<dbReference type="PIR" id="A44393">
    <property type="entry name" value="TVHUC3"/>
</dbReference>
<dbReference type="RefSeq" id="NP_001287725.1">
    <property type="nucleotide sequence ID" value="NM_001300796.1"/>
</dbReference>
<dbReference type="RefSeq" id="NP_001287726.1">
    <property type="nucleotide sequence ID" value="NM_001300797.1"/>
</dbReference>
<dbReference type="RefSeq" id="NP_006316.1">
    <property type="nucleotide sequence ID" value="NM_006325.5"/>
</dbReference>
<dbReference type="PDB" id="1I2M">
    <property type="method" value="X-ray"/>
    <property type="resolution" value="1.76 A"/>
    <property type="chains" value="A/C=1-216"/>
</dbReference>
<dbReference type="PDB" id="1IBR">
    <property type="method" value="X-ray"/>
    <property type="resolution" value="2.30 A"/>
    <property type="chains" value="A/C=1-216"/>
</dbReference>
<dbReference type="PDB" id="1K5D">
    <property type="method" value="X-ray"/>
    <property type="resolution" value="2.70 A"/>
    <property type="chains" value="A/D/G/J=1-216"/>
</dbReference>
<dbReference type="PDB" id="1K5G">
    <property type="method" value="X-ray"/>
    <property type="resolution" value="3.10 A"/>
    <property type="chains" value="A/D/G/J=1-216"/>
</dbReference>
<dbReference type="PDB" id="1QBK">
    <property type="method" value="X-ray"/>
    <property type="resolution" value="3.00 A"/>
    <property type="chains" value="C=1-216"/>
</dbReference>
<dbReference type="PDB" id="1RRP">
    <property type="method" value="X-ray"/>
    <property type="resolution" value="2.96 A"/>
    <property type="chains" value="A/C=8-211"/>
</dbReference>
<dbReference type="PDB" id="2MMC">
    <property type="method" value="NMR"/>
    <property type="chains" value="A=1-216"/>
</dbReference>
<dbReference type="PDB" id="2MMG">
    <property type="method" value="NMR"/>
    <property type="chains" value="A=1-216"/>
</dbReference>
<dbReference type="PDB" id="2N1B">
    <property type="method" value="NMR"/>
    <property type="chains" value="A=1-216"/>
</dbReference>
<dbReference type="PDB" id="3CH5">
    <property type="method" value="X-ray"/>
    <property type="resolution" value="2.10 A"/>
    <property type="chains" value="A=1-216"/>
</dbReference>
<dbReference type="PDB" id="3EA5">
    <property type="method" value="X-ray"/>
    <property type="resolution" value="2.50 A"/>
    <property type="chains" value="A/C=1-216"/>
</dbReference>
<dbReference type="PDB" id="3GJ0">
    <property type="method" value="X-ray"/>
    <property type="resolution" value="1.48 A"/>
    <property type="chains" value="A/B=2-216"/>
</dbReference>
<dbReference type="PDB" id="3GJ3">
    <property type="method" value="X-ray"/>
    <property type="resolution" value="1.79 A"/>
    <property type="chains" value="A=2-216"/>
</dbReference>
<dbReference type="PDB" id="3GJ4">
    <property type="method" value="X-ray"/>
    <property type="resolution" value="2.15 A"/>
    <property type="chains" value="A/C=2-216"/>
</dbReference>
<dbReference type="PDB" id="3GJ5">
    <property type="method" value="X-ray"/>
    <property type="resolution" value="1.79 A"/>
    <property type="chains" value="A/C=2-216"/>
</dbReference>
<dbReference type="PDB" id="3GJ6">
    <property type="method" value="X-ray"/>
    <property type="resolution" value="2.70 A"/>
    <property type="chains" value="A=2-216"/>
</dbReference>
<dbReference type="PDB" id="3GJ7">
    <property type="method" value="X-ray"/>
    <property type="resolution" value="1.93 A"/>
    <property type="chains" value="A/C=2-216"/>
</dbReference>
<dbReference type="PDB" id="3GJ8">
    <property type="method" value="X-ray"/>
    <property type="resolution" value="1.82 A"/>
    <property type="chains" value="A/C=2-216"/>
</dbReference>
<dbReference type="PDB" id="3GJX">
    <property type="method" value="X-ray"/>
    <property type="resolution" value="2.50 A"/>
    <property type="chains" value="C/F=1-216"/>
</dbReference>
<dbReference type="PDB" id="3NBY">
    <property type="method" value="X-ray"/>
    <property type="resolution" value="3.42 A"/>
    <property type="chains" value="C/F=5-180"/>
</dbReference>
<dbReference type="PDB" id="3NBZ">
    <property type="method" value="X-ray"/>
    <property type="resolution" value="2.80 A"/>
    <property type="chains" value="C/F=5-180"/>
</dbReference>
<dbReference type="PDB" id="3NC0">
    <property type="method" value="X-ray"/>
    <property type="resolution" value="2.90 A"/>
    <property type="chains" value="C/F=5-180"/>
</dbReference>
<dbReference type="PDB" id="3NC1">
    <property type="method" value="X-ray"/>
    <property type="resolution" value="3.35 A"/>
    <property type="chains" value="C=1-180"/>
</dbReference>
<dbReference type="PDB" id="3ZJY">
    <property type="method" value="X-ray"/>
    <property type="resolution" value="3.60 A"/>
    <property type="chains" value="A/D/F=1-180"/>
</dbReference>
<dbReference type="PDB" id="4C0Q">
    <property type="method" value="X-ray"/>
    <property type="resolution" value="3.42 A"/>
    <property type="chains" value="C/D=2-216"/>
</dbReference>
<dbReference type="PDB" id="4GMX">
    <property type="method" value="X-ray"/>
    <property type="resolution" value="2.10 A"/>
    <property type="chains" value="A=1-216"/>
</dbReference>
<dbReference type="PDB" id="4GPT">
    <property type="method" value="X-ray"/>
    <property type="resolution" value="2.22 A"/>
    <property type="chains" value="A=1-216"/>
</dbReference>
<dbReference type="PDB" id="4HAT">
    <property type="method" value="X-ray"/>
    <property type="resolution" value="1.78 A"/>
    <property type="chains" value="A=1-216"/>
</dbReference>
<dbReference type="PDB" id="4HAU">
    <property type="method" value="X-ray"/>
    <property type="resolution" value="2.00 A"/>
    <property type="chains" value="A=1-216"/>
</dbReference>
<dbReference type="PDB" id="4HAV">
    <property type="method" value="X-ray"/>
    <property type="resolution" value="2.00 A"/>
    <property type="chains" value="A=1-216"/>
</dbReference>
<dbReference type="PDB" id="4HAW">
    <property type="method" value="X-ray"/>
    <property type="resolution" value="1.90 A"/>
    <property type="chains" value="A=1-216"/>
</dbReference>
<dbReference type="PDB" id="4HAX">
    <property type="method" value="X-ray"/>
    <property type="resolution" value="2.28 A"/>
    <property type="chains" value="A=1-216"/>
</dbReference>
<dbReference type="PDB" id="4HAY">
    <property type="method" value="X-ray"/>
    <property type="resolution" value="2.30 A"/>
    <property type="chains" value="A=1-216"/>
</dbReference>
<dbReference type="PDB" id="4HAZ">
    <property type="method" value="X-ray"/>
    <property type="resolution" value="1.90 A"/>
    <property type="chains" value="A=1-216"/>
</dbReference>
<dbReference type="PDB" id="4HB0">
    <property type="method" value="X-ray"/>
    <property type="resolution" value="2.20 A"/>
    <property type="chains" value="A=1-216"/>
</dbReference>
<dbReference type="PDB" id="4HB2">
    <property type="method" value="X-ray"/>
    <property type="resolution" value="1.80 A"/>
    <property type="chains" value="A=1-216"/>
</dbReference>
<dbReference type="PDB" id="4HB3">
    <property type="method" value="X-ray"/>
    <property type="resolution" value="2.80 A"/>
    <property type="chains" value="A=1-216"/>
</dbReference>
<dbReference type="PDB" id="4HB4">
    <property type="method" value="X-ray"/>
    <property type="resolution" value="2.05 A"/>
    <property type="chains" value="A=1-216"/>
</dbReference>
<dbReference type="PDB" id="4OL0">
    <property type="method" value="X-ray"/>
    <property type="resolution" value="2.90 A"/>
    <property type="chains" value="A=1-216"/>
</dbReference>
<dbReference type="PDB" id="4WVF">
    <property type="method" value="X-ray"/>
    <property type="resolution" value="1.80 A"/>
    <property type="chains" value="A=1-216"/>
</dbReference>
<dbReference type="PDB" id="5CIQ">
    <property type="method" value="X-ray"/>
    <property type="resolution" value="1.65 A"/>
    <property type="chains" value="A/B=1-216"/>
</dbReference>
<dbReference type="PDB" id="5CIT">
    <property type="method" value="X-ray"/>
    <property type="resolution" value="1.75 A"/>
    <property type="chains" value="A/B=1-216"/>
</dbReference>
<dbReference type="PDB" id="5CIW">
    <property type="method" value="X-ray"/>
    <property type="resolution" value="1.75 A"/>
    <property type="chains" value="A/B=1-216"/>
</dbReference>
<dbReference type="PDB" id="5CJ2">
    <property type="method" value="X-ray"/>
    <property type="resolution" value="1.75 A"/>
    <property type="chains" value="A/B/C/D/E/F/G/H=1-216"/>
</dbReference>
<dbReference type="PDB" id="5CLL">
    <property type="method" value="X-ray"/>
    <property type="resolution" value="2.45 A"/>
    <property type="chains" value="A/C=1-191"/>
</dbReference>
<dbReference type="PDB" id="5CLQ">
    <property type="method" value="X-ray"/>
    <property type="resolution" value="3.20 A"/>
    <property type="chains" value="A/C=1-216"/>
</dbReference>
<dbReference type="PDB" id="5DH9">
    <property type="method" value="X-ray"/>
    <property type="resolution" value="2.55 A"/>
    <property type="chains" value="A=1-216"/>
</dbReference>
<dbReference type="PDB" id="5DHA">
    <property type="method" value="X-ray"/>
    <property type="resolution" value="2.95 A"/>
    <property type="chains" value="A=1-216"/>
</dbReference>
<dbReference type="PDB" id="5DHF">
    <property type="method" value="X-ray"/>
    <property type="resolution" value="2.29 A"/>
    <property type="chains" value="A=1-216"/>
</dbReference>
<dbReference type="PDB" id="5DI9">
    <property type="method" value="X-ray"/>
    <property type="resolution" value="2.28 A"/>
    <property type="chains" value="A=1-216"/>
</dbReference>
<dbReference type="PDB" id="5DIF">
    <property type="method" value="X-ray"/>
    <property type="resolution" value="2.09 A"/>
    <property type="chains" value="A=1-216"/>
</dbReference>
<dbReference type="PDB" id="5DIS">
    <property type="method" value="X-ray"/>
    <property type="resolution" value="2.85 A"/>
    <property type="chains" value="B=8-179"/>
</dbReference>
<dbReference type="PDB" id="5DLQ">
    <property type="method" value="X-ray"/>
    <property type="resolution" value="3.20 A"/>
    <property type="chains" value="C/D=5-180"/>
</dbReference>
<dbReference type="PDB" id="5FYQ">
    <property type="method" value="X-ray"/>
    <property type="resolution" value="3.00 A"/>
    <property type="chains" value="C/D=31-43"/>
</dbReference>
<dbReference type="PDB" id="5JLJ">
    <property type="method" value="X-ray"/>
    <property type="resolution" value="2.50 A"/>
    <property type="chains" value="A=1-216"/>
</dbReference>
<dbReference type="PDB" id="5UWH">
    <property type="method" value="X-ray"/>
    <property type="resolution" value="2.26 A"/>
    <property type="chains" value="A=1-216"/>
</dbReference>
<dbReference type="PDB" id="5UWI">
    <property type="method" value="X-ray"/>
    <property type="resolution" value="2.14 A"/>
    <property type="chains" value="A=1-216"/>
</dbReference>
<dbReference type="PDB" id="5UWJ">
    <property type="method" value="X-ray"/>
    <property type="resolution" value="2.22 A"/>
    <property type="chains" value="A=1-216"/>
</dbReference>
<dbReference type="PDB" id="5UWO">
    <property type="method" value="X-ray"/>
    <property type="resolution" value="2.35 A"/>
    <property type="chains" value="A=1-216"/>
</dbReference>
<dbReference type="PDB" id="5UWP">
    <property type="method" value="X-ray"/>
    <property type="resolution" value="2.05 A"/>
    <property type="chains" value="A=1-216"/>
</dbReference>
<dbReference type="PDB" id="5UWQ">
    <property type="method" value="X-ray"/>
    <property type="resolution" value="2.28 A"/>
    <property type="chains" value="A=1-216"/>
</dbReference>
<dbReference type="PDB" id="5UWR">
    <property type="method" value="X-ray"/>
    <property type="resolution" value="2.24 A"/>
    <property type="chains" value="A=1-216"/>
</dbReference>
<dbReference type="PDB" id="5UWS">
    <property type="method" value="X-ray"/>
    <property type="resolution" value="2.40 A"/>
    <property type="chains" value="A=1-216"/>
</dbReference>
<dbReference type="PDB" id="5UWT">
    <property type="method" value="X-ray"/>
    <property type="resolution" value="2.34 A"/>
    <property type="chains" value="A=1-216"/>
</dbReference>
<dbReference type="PDB" id="5UWU">
    <property type="method" value="X-ray"/>
    <property type="resolution" value="2.24 A"/>
    <property type="chains" value="A=1-216"/>
</dbReference>
<dbReference type="PDB" id="5UWW">
    <property type="method" value="X-ray"/>
    <property type="resolution" value="2.15 A"/>
    <property type="chains" value="A=1-216"/>
</dbReference>
<dbReference type="PDB" id="5YRO">
    <property type="method" value="X-ray"/>
    <property type="resolution" value="2.40 A"/>
    <property type="chains" value="A=1-216"/>
</dbReference>
<dbReference type="PDB" id="5YST">
    <property type="method" value="X-ray"/>
    <property type="resolution" value="2.04 A"/>
    <property type="chains" value="A=1-216"/>
</dbReference>
<dbReference type="PDB" id="5YSU">
    <property type="method" value="X-ray"/>
    <property type="resolution" value="2.30 A"/>
    <property type="chains" value="A=1-216"/>
</dbReference>
<dbReference type="PDB" id="5YTB">
    <property type="method" value="X-ray"/>
    <property type="resolution" value="2.30 A"/>
    <property type="chains" value="A=1-216"/>
</dbReference>
<dbReference type="PDB" id="5ZPU">
    <property type="method" value="X-ray"/>
    <property type="resolution" value="2.60 A"/>
    <property type="chains" value="A=1-216"/>
</dbReference>
<dbReference type="PDB" id="6A38">
    <property type="method" value="X-ray"/>
    <property type="resolution" value="2.69 A"/>
    <property type="chains" value="A=1-216"/>
</dbReference>
<dbReference type="PDB" id="6A3A">
    <property type="method" value="X-ray"/>
    <property type="resolution" value="2.30 A"/>
    <property type="chains" value="A=1-216"/>
</dbReference>
<dbReference type="PDB" id="6A3B">
    <property type="method" value="X-ray"/>
    <property type="resolution" value="2.51 A"/>
    <property type="chains" value="A=1-216"/>
</dbReference>
<dbReference type="PDB" id="6A3C">
    <property type="method" value="X-ray"/>
    <property type="resolution" value="2.35 A"/>
    <property type="chains" value="A=1-216"/>
</dbReference>
<dbReference type="PDB" id="6A3E">
    <property type="method" value="X-ray"/>
    <property type="resolution" value="2.70 A"/>
    <property type="chains" value="A=1-216"/>
</dbReference>
<dbReference type="PDB" id="6CIT">
    <property type="method" value="X-ray"/>
    <property type="resolution" value="2.03 A"/>
    <property type="chains" value="A=1-216"/>
</dbReference>
<dbReference type="PDB" id="6KFT">
    <property type="method" value="X-ray"/>
    <property type="resolution" value="2.51 A"/>
    <property type="chains" value="A=1-216"/>
</dbReference>
<dbReference type="PDB" id="6LQ9">
    <property type="method" value="X-ray"/>
    <property type="resolution" value="2.50 A"/>
    <property type="chains" value="A=1-216"/>
</dbReference>
<dbReference type="PDB" id="6M60">
    <property type="method" value="X-ray"/>
    <property type="resolution" value="2.17 A"/>
    <property type="chains" value="A=1-216"/>
</dbReference>
<dbReference type="PDB" id="6M6X">
    <property type="method" value="X-ray"/>
    <property type="resolution" value="2.88 A"/>
    <property type="chains" value="A=1-216"/>
</dbReference>
<dbReference type="PDB" id="6Q82">
    <property type="method" value="X-ray"/>
    <property type="resolution" value="2.99 A"/>
    <property type="chains" value="B=5-180"/>
</dbReference>
<dbReference type="PDB" id="6Q84">
    <property type="method" value="X-ray"/>
    <property type="resolution" value="3.70 A"/>
    <property type="chains" value="B/E=5-180"/>
</dbReference>
<dbReference type="PDB" id="6TVO">
    <property type="method" value="X-ray"/>
    <property type="resolution" value="3.20 A"/>
    <property type="chains" value="B=1-180"/>
</dbReference>
<dbReference type="PDB" id="6X2M">
    <property type="method" value="X-ray"/>
    <property type="resolution" value="2.35 A"/>
    <property type="chains" value="A=1-216"/>
</dbReference>
<dbReference type="PDB" id="6X2O">
    <property type="method" value="X-ray"/>
    <property type="resolution" value="2.55 A"/>
    <property type="chains" value="A=1-216"/>
</dbReference>
<dbReference type="PDB" id="6X2P">
    <property type="method" value="X-ray"/>
    <property type="resolution" value="2.40 A"/>
    <property type="chains" value="A=1-216"/>
</dbReference>
<dbReference type="PDB" id="6X2R">
    <property type="method" value="X-ray"/>
    <property type="resolution" value="2.30 A"/>
    <property type="chains" value="A=1-216"/>
</dbReference>
<dbReference type="PDB" id="6X2S">
    <property type="method" value="X-ray"/>
    <property type="resolution" value="2.50 A"/>
    <property type="chains" value="A=1-216"/>
</dbReference>
<dbReference type="PDB" id="6X2U">
    <property type="method" value="X-ray"/>
    <property type="resolution" value="2.20 A"/>
    <property type="chains" value="A=1-216"/>
</dbReference>
<dbReference type="PDB" id="6X2V">
    <property type="method" value="X-ray"/>
    <property type="resolution" value="2.82 A"/>
    <property type="chains" value="A=1-216"/>
</dbReference>
<dbReference type="PDB" id="6X2W">
    <property type="method" value="X-ray"/>
    <property type="resolution" value="3.00 A"/>
    <property type="chains" value="A=1-216"/>
</dbReference>
<dbReference type="PDB" id="6X2X">
    <property type="method" value="X-ray"/>
    <property type="resolution" value="2.46 A"/>
    <property type="chains" value="A=1-216"/>
</dbReference>
<dbReference type="PDB" id="6X2Y">
    <property type="method" value="X-ray"/>
    <property type="resolution" value="2.30 A"/>
    <property type="chains" value="A=1-216"/>
</dbReference>
<dbReference type="PDB" id="6XJP">
    <property type="method" value="X-ray"/>
    <property type="resolution" value="2.80 A"/>
    <property type="chains" value="A=1-216"/>
</dbReference>
<dbReference type="PDB" id="6XJR">
    <property type="method" value="X-ray"/>
    <property type="resolution" value="1.94 A"/>
    <property type="chains" value="A=1-216"/>
</dbReference>
<dbReference type="PDB" id="6XJS">
    <property type="method" value="X-ray"/>
    <property type="resolution" value="1.94 A"/>
    <property type="chains" value="A=1-216"/>
</dbReference>
<dbReference type="PDB" id="6XJT">
    <property type="method" value="X-ray"/>
    <property type="resolution" value="2.41 A"/>
    <property type="chains" value="A=1-216"/>
</dbReference>
<dbReference type="PDB" id="6XJU">
    <property type="method" value="X-ray"/>
    <property type="resolution" value="2.19 A"/>
    <property type="chains" value="A=1-216"/>
</dbReference>
<dbReference type="PDB" id="7B51">
    <property type="method" value="X-ray"/>
    <property type="resolution" value="2.58 A"/>
    <property type="chains" value="B=1-180"/>
</dbReference>
<dbReference type="PDB" id="7CND">
    <property type="method" value="X-ray"/>
    <property type="resolution" value="1.80 A"/>
    <property type="chains" value="A=1-216"/>
</dbReference>
<dbReference type="PDB" id="7DBG">
    <property type="method" value="X-ray"/>
    <property type="resolution" value="2.06 A"/>
    <property type="chains" value="A=1-216"/>
</dbReference>
<dbReference type="PDB" id="7L5E">
    <property type="method" value="X-ray"/>
    <property type="resolution" value="1.94 A"/>
    <property type="chains" value="A=1-216"/>
</dbReference>
<dbReference type="PDB" id="7MNP">
    <property type="method" value="X-ray"/>
    <property type="resolution" value="2.05 A"/>
    <property type="chains" value="A/C=1-216"/>
</dbReference>
<dbReference type="PDB" id="7MNQ">
    <property type="method" value="X-ray"/>
    <property type="resolution" value="2.05 A"/>
    <property type="chains" value="A=1-216"/>
</dbReference>
<dbReference type="PDB" id="7MNR">
    <property type="method" value="X-ray"/>
    <property type="resolution" value="1.80 A"/>
    <property type="chains" value="A=1-216"/>
</dbReference>
<dbReference type="PDB" id="7MNS">
    <property type="method" value="X-ray"/>
    <property type="resolution" value="2.10 A"/>
    <property type="chains" value="A=1-216"/>
</dbReference>
<dbReference type="PDB" id="7MNT">
    <property type="method" value="X-ray"/>
    <property type="resolution" value="2.45 A"/>
    <property type="chains" value="A/C=1-216"/>
</dbReference>
<dbReference type="PDB" id="7MNU">
    <property type="method" value="X-ray"/>
    <property type="resolution" value="2.00 A"/>
    <property type="chains" value="A=1-216"/>
</dbReference>
<dbReference type="PDB" id="7MNV">
    <property type="method" value="X-ray"/>
    <property type="resolution" value="1.80 A"/>
    <property type="chains" value="A=1-216"/>
</dbReference>
<dbReference type="PDB" id="7MNW">
    <property type="method" value="X-ray"/>
    <property type="resolution" value="2.40 A"/>
    <property type="chains" value="A/C/E/G=1-216"/>
</dbReference>
<dbReference type="PDB" id="7MNX">
    <property type="method" value="X-ray"/>
    <property type="resolution" value="2.40 A"/>
    <property type="chains" value="A/C/E/G/I/K=1-216"/>
</dbReference>
<dbReference type="PDB" id="7MNY">
    <property type="method" value="X-ray"/>
    <property type="resolution" value="2.70 A"/>
    <property type="chains" value="A/C/E/G/I/K=1-216"/>
</dbReference>
<dbReference type="PDB" id="7MNZ">
    <property type="method" value="X-ray"/>
    <property type="resolution" value="2.35 A"/>
    <property type="chains" value="A/C/E/G/I/K=1-215"/>
</dbReference>
<dbReference type="PDB" id="7MO0">
    <property type="method" value="X-ray"/>
    <property type="resolution" value="2.45 A"/>
    <property type="chains" value="A/C=1-216"/>
</dbReference>
<dbReference type="PDB" id="7MO1">
    <property type="method" value="X-ray"/>
    <property type="resolution" value="1.60 A"/>
    <property type="chains" value="A=1-216"/>
</dbReference>
<dbReference type="PDB" id="7MO2">
    <property type="method" value="X-ray"/>
    <property type="resolution" value="1.65 A"/>
    <property type="chains" value="A/C=1-216"/>
</dbReference>
<dbReference type="PDB" id="7MO3">
    <property type="method" value="X-ray"/>
    <property type="resolution" value="2.05 A"/>
    <property type="chains" value="A/C=1-216"/>
</dbReference>
<dbReference type="PDB" id="7MO4">
    <property type="method" value="X-ray"/>
    <property type="resolution" value="2.40 A"/>
    <property type="chains" value="A/C=1-216"/>
</dbReference>
<dbReference type="PDB" id="7MO5">
    <property type="method" value="X-ray"/>
    <property type="resolution" value="1.55 A"/>
    <property type="chains" value="A=1-216"/>
</dbReference>
<dbReference type="PDB" id="7YPZ">
    <property type="method" value="X-ray"/>
    <property type="resolution" value="2.15 A"/>
    <property type="chains" value="A=1-216"/>
</dbReference>
<dbReference type="PDB" id="8HQ3">
    <property type="method" value="X-ray"/>
    <property type="resolution" value="2.10 A"/>
    <property type="chains" value="A=1-216"/>
</dbReference>
<dbReference type="PDB" id="8HQ4">
    <property type="method" value="X-ray"/>
    <property type="resolution" value="2.12 A"/>
    <property type="chains" value="A=1-216"/>
</dbReference>
<dbReference type="PDB" id="8HQ5">
    <property type="method" value="X-ray"/>
    <property type="resolution" value="2.25 A"/>
    <property type="chains" value="A=1-216"/>
</dbReference>
<dbReference type="PDB" id="8HQ6">
    <property type="method" value="X-ray"/>
    <property type="resolution" value="2.03 A"/>
    <property type="chains" value="A=1-216"/>
</dbReference>
<dbReference type="PDB" id="8HUF">
    <property type="method" value="X-ray"/>
    <property type="resolution" value="2.29 A"/>
    <property type="chains" value="A=1-216"/>
</dbReference>
<dbReference type="PDB" id="8HUG">
    <property type="method" value="X-ray"/>
    <property type="resolution" value="2.15 A"/>
    <property type="chains" value="A=1-216"/>
</dbReference>
<dbReference type="PDB" id="8ITV">
    <property type="method" value="X-ray"/>
    <property type="resolution" value="2.30 A"/>
    <property type="chains" value="A=1-216"/>
</dbReference>
<dbReference type="PDB" id="8UX1">
    <property type="method" value="EM"/>
    <property type="resolution" value="2.50 A"/>
    <property type="chains" value="K=1-216"/>
</dbReference>
<dbReference type="PDB" id="9B62">
    <property type="method" value="EM"/>
    <property type="resolution" value="2.90 A"/>
    <property type="chains" value="B/F=1-216"/>
</dbReference>
<dbReference type="PDBsum" id="1I2M"/>
<dbReference type="PDBsum" id="1IBR"/>
<dbReference type="PDBsum" id="1K5D"/>
<dbReference type="PDBsum" id="1K5G"/>
<dbReference type="PDBsum" id="1QBK"/>
<dbReference type="PDBsum" id="1RRP"/>
<dbReference type="PDBsum" id="2MMC"/>
<dbReference type="PDBsum" id="2MMG"/>
<dbReference type="PDBsum" id="2N1B"/>
<dbReference type="PDBsum" id="3CH5"/>
<dbReference type="PDBsum" id="3EA5"/>
<dbReference type="PDBsum" id="3GJ0"/>
<dbReference type="PDBsum" id="3GJ3"/>
<dbReference type="PDBsum" id="3GJ4"/>
<dbReference type="PDBsum" id="3GJ5"/>
<dbReference type="PDBsum" id="3GJ6"/>
<dbReference type="PDBsum" id="3GJ7"/>
<dbReference type="PDBsum" id="3GJ8"/>
<dbReference type="PDBsum" id="3GJX"/>
<dbReference type="PDBsum" id="3NBY"/>
<dbReference type="PDBsum" id="3NBZ"/>
<dbReference type="PDBsum" id="3NC0"/>
<dbReference type="PDBsum" id="3NC1"/>
<dbReference type="PDBsum" id="3ZJY"/>
<dbReference type="PDBsum" id="4C0Q"/>
<dbReference type="PDBsum" id="4GMX"/>
<dbReference type="PDBsum" id="4GPT"/>
<dbReference type="PDBsum" id="4HAT"/>
<dbReference type="PDBsum" id="4HAU"/>
<dbReference type="PDBsum" id="4HAV"/>
<dbReference type="PDBsum" id="4HAW"/>
<dbReference type="PDBsum" id="4HAX"/>
<dbReference type="PDBsum" id="4HAY"/>
<dbReference type="PDBsum" id="4HAZ"/>
<dbReference type="PDBsum" id="4HB0"/>
<dbReference type="PDBsum" id="4HB2"/>
<dbReference type="PDBsum" id="4HB3"/>
<dbReference type="PDBsum" id="4HB4"/>
<dbReference type="PDBsum" id="4OL0"/>
<dbReference type="PDBsum" id="4WVF"/>
<dbReference type="PDBsum" id="5CIQ"/>
<dbReference type="PDBsum" id="5CIT"/>
<dbReference type="PDBsum" id="5CIW"/>
<dbReference type="PDBsum" id="5CJ2"/>
<dbReference type="PDBsum" id="5CLL"/>
<dbReference type="PDBsum" id="5CLQ"/>
<dbReference type="PDBsum" id="5DH9"/>
<dbReference type="PDBsum" id="5DHA"/>
<dbReference type="PDBsum" id="5DHF"/>
<dbReference type="PDBsum" id="5DI9"/>
<dbReference type="PDBsum" id="5DIF"/>
<dbReference type="PDBsum" id="5DIS"/>
<dbReference type="PDBsum" id="5DLQ"/>
<dbReference type="PDBsum" id="5FYQ"/>
<dbReference type="PDBsum" id="5JLJ"/>
<dbReference type="PDBsum" id="5UWH"/>
<dbReference type="PDBsum" id="5UWI"/>
<dbReference type="PDBsum" id="5UWJ"/>
<dbReference type="PDBsum" id="5UWO"/>
<dbReference type="PDBsum" id="5UWP"/>
<dbReference type="PDBsum" id="5UWQ"/>
<dbReference type="PDBsum" id="5UWR"/>
<dbReference type="PDBsum" id="5UWS"/>
<dbReference type="PDBsum" id="5UWT"/>
<dbReference type="PDBsum" id="5UWU"/>
<dbReference type="PDBsum" id="5UWW"/>
<dbReference type="PDBsum" id="5YRO"/>
<dbReference type="PDBsum" id="5YST"/>
<dbReference type="PDBsum" id="5YSU"/>
<dbReference type="PDBsum" id="5YTB"/>
<dbReference type="PDBsum" id="5ZPU"/>
<dbReference type="PDBsum" id="6A38"/>
<dbReference type="PDBsum" id="6A3A"/>
<dbReference type="PDBsum" id="6A3B"/>
<dbReference type="PDBsum" id="6A3C"/>
<dbReference type="PDBsum" id="6A3E"/>
<dbReference type="PDBsum" id="6CIT"/>
<dbReference type="PDBsum" id="6KFT"/>
<dbReference type="PDBsum" id="6LQ9"/>
<dbReference type="PDBsum" id="6M60"/>
<dbReference type="PDBsum" id="6M6X"/>
<dbReference type="PDBsum" id="6Q82"/>
<dbReference type="PDBsum" id="6Q84"/>
<dbReference type="PDBsum" id="6TVO"/>
<dbReference type="PDBsum" id="6X2M"/>
<dbReference type="PDBsum" id="6X2O"/>
<dbReference type="PDBsum" id="6X2P"/>
<dbReference type="PDBsum" id="6X2R"/>
<dbReference type="PDBsum" id="6X2S"/>
<dbReference type="PDBsum" id="6X2U"/>
<dbReference type="PDBsum" id="6X2V"/>
<dbReference type="PDBsum" id="6X2W"/>
<dbReference type="PDBsum" id="6X2X"/>
<dbReference type="PDBsum" id="6X2Y"/>
<dbReference type="PDBsum" id="6XJP"/>
<dbReference type="PDBsum" id="6XJR"/>
<dbReference type="PDBsum" id="6XJS"/>
<dbReference type="PDBsum" id="6XJT"/>
<dbReference type="PDBsum" id="6XJU"/>
<dbReference type="PDBsum" id="7B51"/>
<dbReference type="PDBsum" id="7CND"/>
<dbReference type="PDBsum" id="7DBG"/>
<dbReference type="PDBsum" id="7L5E"/>
<dbReference type="PDBsum" id="7MNP"/>
<dbReference type="PDBsum" id="7MNQ"/>
<dbReference type="PDBsum" id="7MNR"/>
<dbReference type="PDBsum" id="7MNS"/>
<dbReference type="PDBsum" id="7MNT"/>
<dbReference type="PDBsum" id="7MNU"/>
<dbReference type="PDBsum" id="7MNV"/>
<dbReference type="PDBsum" id="7MNW"/>
<dbReference type="PDBsum" id="7MNX"/>
<dbReference type="PDBsum" id="7MNY"/>
<dbReference type="PDBsum" id="7MNZ"/>
<dbReference type="PDBsum" id="7MO0"/>
<dbReference type="PDBsum" id="7MO1"/>
<dbReference type="PDBsum" id="7MO2"/>
<dbReference type="PDBsum" id="7MO3"/>
<dbReference type="PDBsum" id="7MO4"/>
<dbReference type="PDBsum" id="7MO5"/>
<dbReference type="PDBsum" id="7YPZ"/>
<dbReference type="PDBsum" id="8HQ3"/>
<dbReference type="PDBsum" id="8HQ4"/>
<dbReference type="PDBsum" id="8HQ5"/>
<dbReference type="PDBsum" id="8HQ6"/>
<dbReference type="PDBsum" id="8HUF"/>
<dbReference type="PDBsum" id="8HUG"/>
<dbReference type="PDBsum" id="8ITV"/>
<dbReference type="PDBsum" id="8UX1"/>
<dbReference type="PDBsum" id="9B62"/>
<dbReference type="BMRB" id="P62826"/>
<dbReference type="EMDB" id="EMD-42685"/>
<dbReference type="EMDB" id="EMD-44235"/>
<dbReference type="EMDB" id="EMD-44236"/>
<dbReference type="EMDB" id="EMD-44237"/>
<dbReference type="EMDB" id="EMD-44238"/>
<dbReference type="EMDB" id="EMD-44239"/>
<dbReference type="EMDB" id="EMD-44240"/>
<dbReference type="EMDB" id="EMD-44241"/>
<dbReference type="EMDB" id="EMD-44242"/>
<dbReference type="EMDB" id="EMD-44243"/>
<dbReference type="EMDB" id="EMD-6231"/>
<dbReference type="SASBDB" id="P62826"/>
<dbReference type="SMR" id="P62826"/>
<dbReference type="BioGRID" id="111837">
    <property type="interactions" value="490"/>
</dbReference>
<dbReference type="CORUM" id="P62826"/>
<dbReference type="DIP" id="DIP-5929N"/>
<dbReference type="FunCoup" id="P62826">
    <property type="interactions" value="3358"/>
</dbReference>
<dbReference type="IntAct" id="P62826">
    <property type="interactions" value="337"/>
</dbReference>
<dbReference type="MINT" id="P62826"/>
<dbReference type="STRING" id="9606.ENSP00000446215"/>
<dbReference type="ChEMBL" id="CHEMBL1741190"/>
<dbReference type="DrugBank" id="DB04315">
    <property type="generic name" value="Guanosine-5'-Diphosphate"/>
</dbReference>
<dbReference type="DrugCentral" id="P62826"/>
<dbReference type="TCDB" id="9.A.60.1.1">
    <property type="family name" value="the small nuclear rna exporter (snrna-e) family"/>
</dbReference>
<dbReference type="GlyGen" id="P62826">
    <property type="glycosylation" value="1 site, 1 O-linked glycan (1 site)"/>
</dbReference>
<dbReference type="iPTMnet" id="P62826"/>
<dbReference type="PhosphoSitePlus" id="P62826"/>
<dbReference type="SwissPalm" id="P62826"/>
<dbReference type="BioMuta" id="RAN"/>
<dbReference type="DMDM" id="51338598"/>
<dbReference type="OGP" id="P62826"/>
<dbReference type="REPRODUCTION-2DPAGE" id="P62826"/>
<dbReference type="jPOST" id="P62826"/>
<dbReference type="MassIVE" id="P62826"/>
<dbReference type="PaxDb" id="9606-ENSP00000446215"/>
<dbReference type="PeptideAtlas" id="P62826"/>
<dbReference type="ProteomicsDB" id="57429"/>
<dbReference type="Pumba" id="P62826"/>
<dbReference type="TopDownProteomics" id="P62826"/>
<dbReference type="Antibodypedia" id="19412">
    <property type="antibodies" value="596 antibodies from 41 providers"/>
</dbReference>
<dbReference type="DNASU" id="5901"/>
<dbReference type="Ensembl" id="ENST00000392369.6">
    <property type="protein sequence ID" value="ENSP00000376176.2"/>
    <property type="gene ID" value="ENSG00000132341.12"/>
</dbReference>
<dbReference type="Ensembl" id="ENST00000543796.6">
    <property type="protein sequence ID" value="ENSP00000446215.1"/>
    <property type="gene ID" value="ENSG00000132341.12"/>
</dbReference>
<dbReference type="GeneID" id="5901"/>
<dbReference type="KEGG" id="hsa:5901"/>
<dbReference type="MANE-Select" id="ENST00000543796.6">
    <property type="protein sequence ID" value="ENSP00000446215.1"/>
    <property type="RefSeq nucleotide sequence ID" value="NM_006325.5"/>
    <property type="RefSeq protein sequence ID" value="NP_006316.1"/>
</dbReference>
<dbReference type="UCSC" id="uc001uir.4">
    <property type="organism name" value="human"/>
</dbReference>
<dbReference type="AGR" id="HGNC:9846"/>
<dbReference type="CTD" id="5901"/>
<dbReference type="DisGeNET" id="5901"/>
<dbReference type="GeneCards" id="RAN"/>
<dbReference type="HGNC" id="HGNC:9846">
    <property type="gene designation" value="RAN"/>
</dbReference>
<dbReference type="HPA" id="ENSG00000132341">
    <property type="expression patterns" value="Low tissue specificity"/>
</dbReference>
<dbReference type="MIM" id="601179">
    <property type="type" value="gene"/>
</dbReference>
<dbReference type="neXtProt" id="NX_P62826"/>
<dbReference type="OpenTargets" id="ENSG00000132341"/>
<dbReference type="PharmGKB" id="PA34205"/>
<dbReference type="VEuPathDB" id="HostDB:ENSG00000132341"/>
<dbReference type="eggNOG" id="KOG0096">
    <property type="taxonomic scope" value="Eukaryota"/>
</dbReference>
<dbReference type="GeneTree" id="ENSGT00940000153786"/>
<dbReference type="InParanoid" id="P62826"/>
<dbReference type="OMA" id="FNAWDTA"/>
<dbReference type="OrthoDB" id="48625at2759"/>
<dbReference type="PAN-GO" id="P62826">
    <property type="GO annotations" value="5 GO annotations based on evolutionary models"/>
</dbReference>
<dbReference type="PhylomeDB" id="P62826"/>
<dbReference type="TreeFam" id="TF106302"/>
<dbReference type="PathwayCommons" id="P62826"/>
<dbReference type="Reactome" id="R-HSA-165054">
    <property type="pathway name" value="Rev-mediated nuclear export of HIV RNA"/>
</dbReference>
<dbReference type="Reactome" id="R-HSA-1655829">
    <property type="pathway name" value="Regulation of cholesterol biosynthesis by SREBP (SREBF)"/>
</dbReference>
<dbReference type="Reactome" id="R-HSA-168333">
    <property type="pathway name" value="NEP/NS2 Interacts with the Cellular Export Machinery"/>
</dbReference>
<dbReference type="Reactome" id="R-HSA-180746">
    <property type="pathway name" value="Nuclear import of Rev protein"/>
</dbReference>
<dbReference type="Reactome" id="R-HSA-203927">
    <property type="pathway name" value="MicroRNA (miRNA) biogenesis"/>
</dbReference>
<dbReference type="Reactome" id="R-HSA-5578749">
    <property type="pathway name" value="Transcriptional regulation by small RNAs"/>
</dbReference>
<dbReference type="Reactome" id="R-HSA-6784531">
    <property type="pathway name" value="tRNA processing in the nucleus"/>
</dbReference>
<dbReference type="Reactome" id="R-HSA-9615933">
    <property type="pathway name" value="Postmitotic nuclear pore complex (NPC) reformation"/>
</dbReference>
<dbReference type="SignaLink" id="P62826"/>
<dbReference type="SIGNOR" id="P62826"/>
<dbReference type="BioGRID-ORCS" id="5901">
    <property type="hits" value="855 hits in 1140 CRISPR screens"/>
</dbReference>
<dbReference type="CD-CODE" id="8C2F96ED">
    <property type="entry name" value="Centrosome"/>
</dbReference>
<dbReference type="CD-CODE" id="91857CE7">
    <property type="entry name" value="Nucleolus"/>
</dbReference>
<dbReference type="CD-CODE" id="DEE660B4">
    <property type="entry name" value="Stress granule"/>
</dbReference>
<dbReference type="ChiTaRS" id="RAN">
    <property type="organism name" value="human"/>
</dbReference>
<dbReference type="EvolutionaryTrace" id="P62826"/>
<dbReference type="GeneWiki" id="Ran_(biology)"/>
<dbReference type="GenomeRNAi" id="5901"/>
<dbReference type="Pharos" id="P62826">
    <property type="development level" value="Tchem"/>
</dbReference>
<dbReference type="PRO" id="PR:P62826"/>
<dbReference type="Proteomes" id="UP000005640">
    <property type="component" value="Chromosome 12"/>
</dbReference>
<dbReference type="RNAct" id="P62826">
    <property type="molecule type" value="protein"/>
</dbReference>
<dbReference type="Bgee" id="ENSG00000132341">
    <property type="expression patterns" value="Expressed in primordial germ cell in gonad and 208 other cell types or tissues"/>
</dbReference>
<dbReference type="ExpressionAtlas" id="P62826">
    <property type="expression patterns" value="baseline and differential"/>
</dbReference>
<dbReference type="GO" id="GO:0005814">
    <property type="term" value="C:centriole"/>
    <property type="evidence" value="ECO:0000314"/>
    <property type="project" value="UniProtKB"/>
</dbReference>
<dbReference type="GO" id="GO:0000785">
    <property type="term" value="C:chromatin"/>
    <property type="evidence" value="ECO:0000314"/>
    <property type="project" value="UniProtKB"/>
</dbReference>
<dbReference type="GO" id="GO:0005737">
    <property type="term" value="C:cytoplasm"/>
    <property type="evidence" value="ECO:0000314"/>
    <property type="project" value="UniProtKB"/>
</dbReference>
<dbReference type="GO" id="GO:0005829">
    <property type="term" value="C:cytosol"/>
    <property type="evidence" value="ECO:0000304"/>
    <property type="project" value="Reactome"/>
</dbReference>
<dbReference type="GO" id="GO:0070062">
    <property type="term" value="C:extracellular exosome"/>
    <property type="evidence" value="ECO:0007005"/>
    <property type="project" value="UniProtKB"/>
</dbReference>
<dbReference type="GO" id="GO:0001673">
    <property type="term" value="C:male germ cell nucleus"/>
    <property type="evidence" value="ECO:0007669"/>
    <property type="project" value="Ensembl"/>
</dbReference>
<dbReference type="GO" id="GO:0002177">
    <property type="term" value="C:manchette"/>
    <property type="evidence" value="ECO:0007669"/>
    <property type="project" value="Ensembl"/>
</dbReference>
<dbReference type="GO" id="GO:0042470">
    <property type="term" value="C:melanosome"/>
    <property type="evidence" value="ECO:0007669"/>
    <property type="project" value="UniProtKB-SubCell"/>
</dbReference>
<dbReference type="GO" id="GO:0016020">
    <property type="term" value="C:membrane"/>
    <property type="evidence" value="ECO:0007005"/>
    <property type="project" value="UniProtKB"/>
</dbReference>
<dbReference type="GO" id="GO:0030496">
    <property type="term" value="C:midbody"/>
    <property type="evidence" value="ECO:0000314"/>
    <property type="project" value="UniProtKB"/>
</dbReference>
<dbReference type="GO" id="GO:0005635">
    <property type="term" value="C:nuclear envelope"/>
    <property type="evidence" value="ECO:0000314"/>
    <property type="project" value="UniProtKB"/>
</dbReference>
<dbReference type="GO" id="GO:0005643">
    <property type="term" value="C:nuclear pore"/>
    <property type="evidence" value="ECO:0000303"/>
    <property type="project" value="UniProtKB"/>
</dbReference>
<dbReference type="GO" id="GO:0005730">
    <property type="term" value="C:nucleolus"/>
    <property type="evidence" value="ECO:0000314"/>
    <property type="project" value="UniProtKB"/>
</dbReference>
<dbReference type="GO" id="GO:0005654">
    <property type="term" value="C:nucleoplasm"/>
    <property type="evidence" value="ECO:0000314"/>
    <property type="project" value="UniProtKB"/>
</dbReference>
<dbReference type="GO" id="GO:0005634">
    <property type="term" value="C:nucleus"/>
    <property type="evidence" value="ECO:0000314"/>
    <property type="project" value="UniProtKB"/>
</dbReference>
<dbReference type="GO" id="GO:0032991">
    <property type="term" value="C:protein-containing complex"/>
    <property type="evidence" value="ECO:0000314"/>
    <property type="project" value="CAFA"/>
</dbReference>
<dbReference type="GO" id="GO:0055037">
    <property type="term" value="C:recycling endosome"/>
    <property type="evidence" value="ECO:0000314"/>
    <property type="project" value="UniProtKB"/>
</dbReference>
<dbReference type="GO" id="GO:0042565">
    <property type="term" value="C:RNA nuclear export complex"/>
    <property type="evidence" value="ECO:0000314"/>
    <property type="project" value="BHF-UCL"/>
</dbReference>
<dbReference type="GO" id="GO:0036126">
    <property type="term" value="C:sperm flagellum"/>
    <property type="evidence" value="ECO:0007669"/>
    <property type="project" value="Ensembl"/>
</dbReference>
<dbReference type="GO" id="GO:0045296">
    <property type="term" value="F:cadherin binding"/>
    <property type="evidence" value="ECO:0007005"/>
    <property type="project" value="BHF-UCL"/>
</dbReference>
<dbReference type="GO" id="GO:0003682">
    <property type="term" value="F:chromatin binding"/>
    <property type="evidence" value="ECO:0000304"/>
    <property type="project" value="UniProtKB"/>
</dbReference>
<dbReference type="GO" id="GO:0045505">
    <property type="term" value="F:dynein intermediate chain binding"/>
    <property type="evidence" value="ECO:0007669"/>
    <property type="project" value="Ensembl"/>
</dbReference>
<dbReference type="GO" id="GO:0003925">
    <property type="term" value="F:G protein activity"/>
    <property type="evidence" value="ECO:0000314"/>
    <property type="project" value="UniProt"/>
</dbReference>
<dbReference type="GO" id="GO:0019003">
    <property type="term" value="F:GDP binding"/>
    <property type="evidence" value="ECO:0000314"/>
    <property type="project" value="UniProtKB"/>
</dbReference>
<dbReference type="GO" id="GO:0005525">
    <property type="term" value="F:GTP binding"/>
    <property type="evidence" value="ECO:0000314"/>
    <property type="project" value="UniProtKB"/>
</dbReference>
<dbReference type="GO" id="GO:0003924">
    <property type="term" value="F:GTPase activity"/>
    <property type="evidence" value="ECO:0000314"/>
    <property type="project" value="UniProtKB"/>
</dbReference>
<dbReference type="GO" id="GO:0061676">
    <property type="term" value="F:importin-alpha family protein binding"/>
    <property type="evidence" value="ECO:0007669"/>
    <property type="project" value="Ensembl"/>
</dbReference>
<dbReference type="GO" id="GO:0000287">
    <property type="term" value="F:magnesium ion binding"/>
    <property type="evidence" value="ECO:0000314"/>
    <property type="project" value="UniProtKB"/>
</dbReference>
<dbReference type="GO" id="GO:0019904">
    <property type="term" value="F:protein domain specific binding"/>
    <property type="evidence" value="ECO:0007669"/>
    <property type="project" value="Ensembl"/>
</dbReference>
<dbReference type="GO" id="GO:0046982">
    <property type="term" value="F:protein heterodimerization activity"/>
    <property type="evidence" value="ECO:0000353"/>
    <property type="project" value="CAFA"/>
</dbReference>
<dbReference type="GO" id="GO:0044877">
    <property type="term" value="F:protein-containing complex binding"/>
    <property type="evidence" value="ECO:0007669"/>
    <property type="project" value="Ensembl"/>
</dbReference>
<dbReference type="GO" id="GO:0003723">
    <property type="term" value="F:RNA binding"/>
    <property type="evidence" value="ECO:0007005"/>
    <property type="project" value="UniProtKB"/>
</dbReference>
<dbReference type="GO" id="GO:0030036">
    <property type="term" value="P:actin cytoskeleton organization"/>
    <property type="evidence" value="ECO:0007669"/>
    <property type="project" value="Ensembl"/>
</dbReference>
<dbReference type="GO" id="GO:0051301">
    <property type="term" value="P:cell division"/>
    <property type="evidence" value="ECO:0007669"/>
    <property type="project" value="UniProtKB-KW"/>
</dbReference>
<dbReference type="GO" id="GO:0071389">
    <property type="term" value="P:cellular response to mineralocorticoid stimulus"/>
    <property type="evidence" value="ECO:0007669"/>
    <property type="project" value="Ensembl"/>
</dbReference>
<dbReference type="GO" id="GO:0006259">
    <property type="term" value="P:DNA metabolic process"/>
    <property type="evidence" value="ECO:0000304"/>
    <property type="project" value="UniProtKB"/>
</dbReference>
<dbReference type="GO" id="GO:0046039">
    <property type="term" value="P:GTP metabolic process"/>
    <property type="evidence" value="ECO:0000314"/>
    <property type="project" value="UniProtKB"/>
</dbReference>
<dbReference type="GO" id="GO:0021766">
    <property type="term" value="P:hippocampus development"/>
    <property type="evidence" value="ECO:0007669"/>
    <property type="project" value="Ensembl"/>
</dbReference>
<dbReference type="GO" id="GO:0000278">
    <property type="term" value="P:mitotic cell cycle"/>
    <property type="evidence" value="ECO:0000304"/>
    <property type="project" value="UniProtKB"/>
</dbReference>
<dbReference type="GO" id="GO:0000070">
    <property type="term" value="P:mitotic sister chromatid segregation"/>
    <property type="evidence" value="ECO:0000315"/>
    <property type="project" value="UniProtKB"/>
</dbReference>
<dbReference type="GO" id="GO:0007052">
    <property type="term" value="P:mitotic spindle organization"/>
    <property type="evidence" value="ECO:0000304"/>
    <property type="project" value="UniProtKB"/>
</dbReference>
<dbReference type="GO" id="GO:0032092">
    <property type="term" value="P:positive regulation of protein binding"/>
    <property type="evidence" value="ECO:0000314"/>
    <property type="project" value="BHF-UCL"/>
</dbReference>
<dbReference type="GO" id="GO:0042307">
    <property type="term" value="P:positive regulation of protein import into nucleus"/>
    <property type="evidence" value="ECO:0000315"/>
    <property type="project" value="ParkinsonsUK-UCL"/>
</dbReference>
<dbReference type="GO" id="GO:0035281">
    <property type="term" value="P:pre-miRNA export from nucleus"/>
    <property type="evidence" value="ECO:0000305"/>
    <property type="project" value="BHF-UCL"/>
</dbReference>
<dbReference type="GO" id="GO:0006611">
    <property type="term" value="P:protein export from nucleus"/>
    <property type="evidence" value="ECO:0000314"/>
    <property type="project" value="UniProtKB"/>
</dbReference>
<dbReference type="GO" id="GO:0006606">
    <property type="term" value="P:protein import into nucleus"/>
    <property type="evidence" value="ECO:0000314"/>
    <property type="project" value="UniProtKB"/>
</dbReference>
<dbReference type="GO" id="GO:1902570">
    <property type="term" value="P:protein localization to nucleolus"/>
    <property type="evidence" value="ECO:0000315"/>
    <property type="project" value="UniProtKB"/>
</dbReference>
<dbReference type="GO" id="GO:0000055">
    <property type="term" value="P:ribosomal large subunit export from nucleus"/>
    <property type="evidence" value="ECO:0000315"/>
    <property type="project" value="ParkinsonsUK-UCL"/>
</dbReference>
<dbReference type="GO" id="GO:0000056">
    <property type="term" value="P:ribosomal small subunit export from nucleus"/>
    <property type="evidence" value="ECO:0000315"/>
    <property type="project" value="ParkinsonsUK-UCL"/>
</dbReference>
<dbReference type="GO" id="GO:0000054">
    <property type="term" value="P:ribosomal subunit export from nucleus"/>
    <property type="evidence" value="ECO:0000318"/>
    <property type="project" value="GO_Central"/>
</dbReference>
<dbReference type="GO" id="GO:0061015">
    <property type="term" value="P:snRNA import into nucleus"/>
    <property type="evidence" value="ECO:0000315"/>
    <property type="project" value="UniProtKB"/>
</dbReference>
<dbReference type="GO" id="GO:0007286">
    <property type="term" value="P:spermatid development"/>
    <property type="evidence" value="ECO:0007669"/>
    <property type="project" value="Ensembl"/>
</dbReference>
<dbReference type="GO" id="GO:0016032">
    <property type="term" value="P:viral process"/>
    <property type="evidence" value="ECO:0000304"/>
    <property type="project" value="Reactome"/>
</dbReference>
<dbReference type="CDD" id="cd00877">
    <property type="entry name" value="Ran"/>
    <property type="match status" value="1"/>
</dbReference>
<dbReference type="DisProt" id="DP01364"/>
<dbReference type="FunFam" id="3.40.50.300:FF:000131">
    <property type="entry name" value="GTP-binding nuclear protein Ran"/>
    <property type="match status" value="1"/>
</dbReference>
<dbReference type="Gene3D" id="3.40.50.300">
    <property type="entry name" value="P-loop containing nucleotide triphosphate hydrolases"/>
    <property type="match status" value="1"/>
</dbReference>
<dbReference type="IDEAL" id="IID00162"/>
<dbReference type="InterPro" id="IPR027417">
    <property type="entry name" value="P-loop_NTPase"/>
</dbReference>
<dbReference type="InterPro" id="IPR002041">
    <property type="entry name" value="Ran_GTPase"/>
</dbReference>
<dbReference type="InterPro" id="IPR005225">
    <property type="entry name" value="Small_GTP-bd"/>
</dbReference>
<dbReference type="InterPro" id="IPR001806">
    <property type="entry name" value="Small_GTPase"/>
</dbReference>
<dbReference type="NCBIfam" id="TIGR00231">
    <property type="entry name" value="small_GTP"/>
    <property type="match status" value="1"/>
</dbReference>
<dbReference type="PANTHER" id="PTHR24071:SF0">
    <property type="entry name" value="GTP-BINDING NUCLEAR PROTEIN RAN"/>
    <property type="match status" value="1"/>
</dbReference>
<dbReference type="PANTHER" id="PTHR24071">
    <property type="entry name" value="RAN GTPASE"/>
    <property type="match status" value="1"/>
</dbReference>
<dbReference type="Pfam" id="PF00071">
    <property type="entry name" value="Ras"/>
    <property type="match status" value="1"/>
</dbReference>
<dbReference type="PRINTS" id="PR00627">
    <property type="entry name" value="GTPRANTC4"/>
</dbReference>
<dbReference type="SMART" id="SM00175">
    <property type="entry name" value="RAB"/>
    <property type="match status" value="1"/>
</dbReference>
<dbReference type="SMART" id="SM00176">
    <property type="entry name" value="RAN"/>
    <property type="match status" value="1"/>
</dbReference>
<dbReference type="SMART" id="SM00173">
    <property type="entry name" value="RAS"/>
    <property type="match status" value="1"/>
</dbReference>
<dbReference type="SMART" id="SM00174">
    <property type="entry name" value="RHO"/>
    <property type="match status" value="1"/>
</dbReference>
<dbReference type="SUPFAM" id="SSF52540">
    <property type="entry name" value="P-loop containing nucleoside triphosphate hydrolases"/>
    <property type="match status" value="1"/>
</dbReference>
<dbReference type="PROSITE" id="PS51418">
    <property type="entry name" value="RAN"/>
    <property type="match status" value="1"/>
</dbReference>
<comment type="function">
    <text evidence="8 9 11 15 23 24 26 31 37 40 42 45 48 49 50 51 52 54 55 56 64">GTPase involved in nucleocytoplasmic transport, participating both to the import and the export from the nucleus of proteins and RNAs (PubMed:10400640, PubMed:17209048, PubMed:26272610, PubMed:27306458, PubMed:8276887, PubMed:8636225, PubMed:8692944, PubMed:8896452, PubMed:9351834, PubMed:9428644, PubMed:9822603). Switches between a cytoplasmic GDP- and a nuclear GTP-bound state by nucleotide exchange and GTP hydrolysis (PubMed:11336674, PubMed:26272610, PubMed:29040603, PubMed:7819259, PubMed:8636225, PubMed:8692944, PubMed:8896452, PubMed:9351834, PubMed:9428644, PubMed:9822603). Nuclear import receptors such as importin beta bind their substrates only in the absence of GTP-bound RAN and release them upon direct interaction with GTP-bound RAN, while export receptors behave in the opposite way. Thereby, RAN controls cargo loading and release by transport receptors in the proper compartment and ensures the directionality of the transport (PubMed:8896452, PubMed:9351834, PubMed:9428644). Interaction with RANBP1 induces a conformation change in the complex formed by XPO1 and RAN that triggers the release of the nuclear export signal of cargo proteins (PubMed:20485264). RAN (GTP-bound form) triggers microtubule assembly at mitotic chromosomes and is required for normal mitotic spindle assembly and chromosome segregation (PubMed:10408446, PubMed:29040603). Required for normal progress through mitosis (PubMed:12194828, PubMed:29040603, PubMed:8421051). The complex with BIRC5/survivin plays a role in mitotic spindle formation by serving as a physical scaffold to help deliver the RAN effector molecule TPX2 to microtubules (PubMed:18591255). Acts as a negative regulator of the kinase activity of VRK1 and VRK2 (PubMed:18617507). Enhances AR-mediated transactivation. Transactivation decreases as the poly-Gln length within AR increases (PubMed:10400640).</text>
</comment>
<comment type="catalytic activity">
    <reaction evidence="37 50">
        <text>GTP + H2O = GDP + phosphate + H(+)</text>
        <dbReference type="Rhea" id="RHEA:19669"/>
        <dbReference type="ChEBI" id="CHEBI:15377"/>
        <dbReference type="ChEBI" id="CHEBI:15378"/>
        <dbReference type="ChEBI" id="CHEBI:37565"/>
        <dbReference type="ChEBI" id="CHEBI:43474"/>
        <dbReference type="ChEBI" id="CHEBI:58189"/>
    </reaction>
    <physiologicalReaction direction="left-to-right" evidence="37 50">
        <dbReference type="Rhea" id="RHEA:19670"/>
    </physiologicalReaction>
</comment>
<comment type="cofactor">
    <cofactor evidence="37">
        <name>Mg(2+)</name>
        <dbReference type="ChEBI" id="CHEBI:18420"/>
    </cofactor>
    <text evidence="37">Mg(2+) interacts primarily with the phosphate groups of the bound guanine nucleotide.</text>
</comment>
<comment type="subunit">
    <text evidence="1 2 4 5 8 10 11 12 13 14 15 16 17 19 20 21 24 25 26 27 28 29 30 31 33 34 35 37 38 42 43 45 47 52 53 54 55 56">Monomer. Interacts with RANGAP1, which promotes RAN-mediated GTP hydrolysis (PubMed:7819259, PubMed:9428644). Interacts with KPNB1 (PubMed:10367892, PubMed:8896452, PubMed:9428644). Interaction with KPNB1 inhibits RANGAP1-mediated stimulation of GTPase activity (PubMed:9428644). Interacts with RCC1 which promotes the exchange of RAN-bound GDP by GTP (PubMed:11336674, PubMed:12194828, PubMed:1961752, PubMed:7819259). Interaction with KPNB1 inhibits RCC1-mediated exchange of RAN-bound GDP by GTP (PubMed:8896452). Interacts (GTP-bound form) with TNPO1; the interaction is direct (PubMed:9351834). Interacts (GTP-bound form) with TNPO3; the interaction is direct (PubMed:23878195, PubMed:24449914, PubMed:24915079). Interacts with KPNB1 and with TNPO1; both inhibit RAN GTPase activity (PubMed:8896452, PubMed:9428644). Interacts (via C-terminus) with RANBP1, which alleviates the inhibition of RAN GTPase activity (PubMed:11832950, PubMed:7891706, PubMed:8896452, PubMed:9428644). Interacts with RANGRF, which promotes the release of bound guanine nucleotide (PubMed:29040603). RANGRF and RCC1 compete for an overlapping binding site on RAN (PubMed:29040603). Identified in a complex with KPNA2 and CSE1L; interaction with RANBP1 mediates dissociation of RAN from this complex (PubMed:9428644). Interaction with both RANBP1 and KPNA2 promotes dissociation of the complex between RAN and KPNB1 (PubMed:9428644). Identified in a complex composed of RAN, RANGAP1 and RANBP1 (PubMed:16428860). Identified in a complex that contains TNPO1, RAN and RANBP1 (PubMed:9428644). Identified in a nuclear export complex with XPO1 (PubMed:10209022, PubMed:15574331, PubMed:9323133). Found in a nuclear export complex with RANBP3 and XPO1 (PubMed:11425870, PubMed:11571268). Interacts with RANBP2/NUP358 (PubMed:10078529, PubMed:26272610). Interaction with RANBP1 or RANBP2 induces a conformation change in the complex formed by XPO1 and RAN that triggers the release of the nuclear export signal of cargo proteins (PubMed:20485264). Component of a nuclear export receptor complex composed of KPNB1, RAN, SNUPN and XPO1 (PubMed:10209022, PubMed:19389996). Found in a nuclear export complex with RAN, XPO5 and pre-miRNA (By similarity). Interacts (GTP-bound form) with XPO5 (By similarity). Part of a complex consisting of RANBP9, RAN, DYRK1B and COPS5 (PubMed:14500717). Interacts with RANBP9 and RANBP10 (PubMed:14684163). Interacts in its GTP-bound form with BIRC5/survivin at S and M phases of the cell cycle (PubMed:18591255). Interacts with TERT; the interaction requires hydrogen peroxide-mediated phosphorylation of TERT and transports TERT to the nucleus (PubMed:12808100). Interacts with MAD2L2 (PubMed:19753112). Interacts with VRK1 and VRK3 (PubMed:18617507). Interacts with isoform 1 and isoform 2 of VRK2 (PubMed:18617507). Interacts with NEMP1 and KPNB1 (By similarity). Interacts (GDP-bound form) with NUTF2; regulates RAN nuclear import (PubMed:10679025, PubMed:18266911, PubMed:9822603). Interacts with CAPG; mediates CAPG nuclear import (PubMed:10679025, PubMed:18266911). Interacts with NUP153 (PubMed:18611384, PubMed:19505478). Interacts with the AR N-terminal poly-Gln region; the interaction with AR is inversely correlated with the poly-Gln length (PubMed:10400640). Interacts with MYCBP2, which promotes RAN-mediated GTP hydrolysis (PubMed:26304119). Interacts with EPG5 (PubMed:29130391).</text>
</comment>
<comment type="subunit">
    <text evidence="57">(Microbial infection) In case of HIV-1 infection, found in a complex with HIV-1 Rev, RNAs containing a Rev response element (RRE) and XPO1.</text>
</comment>
<comment type="subunit">
    <text evidence="18">(Microbial infection) Found in a complex with HTLV-1 Rex, RANBP3 and XPO1.</text>
</comment>
<comment type="subunit">
    <text evidence="36">(Microbial infection) Interacts with Mengo encephalomyocarditis virus Leader protein; the complex L-RAN recruits cellular kinases responsible for the L-induced nucleocytoplasmic trafficking inhibition.</text>
</comment>
<comment type="interaction">
    <interactant intactId="EBI-286642">
        <id>P62826</id>
    </interactant>
    <interactant intactId="EBI-25835070">
        <id>Q9Y614</id>
        <label>ACTL7B</label>
    </interactant>
    <organismsDiffer>false</organismsDiffer>
    <experiments>3</experiments>
</comment>
<comment type="interaction">
    <interactant intactId="EBI-286642">
        <id>P62826</id>
    </interactant>
    <interactant intactId="EBI-18899653">
        <id>Q6DHV7-2</id>
        <label>ADAL</label>
    </interactant>
    <organismsDiffer>false</organismsDiffer>
    <experiments>3</experiments>
</comment>
<comment type="interaction">
    <interactant intactId="EBI-286642">
        <id>P62826</id>
    </interactant>
    <interactant intactId="EBI-10173507">
        <id>Q6UY14-3</id>
        <label>ADAMTSL4</label>
    </interactant>
    <organismsDiffer>false</organismsDiffer>
    <experiments>3</experiments>
</comment>
<comment type="interaction">
    <interactant intactId="EBI-286642">
        <id>P62826</id>
    </interactant>
    <interactant intactId="EBI-8466265">
        <id>Q96MA6</id>
        <label>AK8</label>
    </interactant>
    <organismsDiffer>false</organismsDiffer>
    <experiments>3</experiments>
</comment>
<comment type="interaction">
    <interactant intactId="EBI-286642">
        <id>P62826</id>
    </interactant>
    <interactant intactId="EBI-9089544">
        <id>Q96Q83-2</id>
        <label>ALKBH3</label>
    </interactant>
    <organismsDiffer>false</organismsDiffer>
    <experiments>3</experiments>
</comment>
<comment type="interaction">
    <interactant intactId="EBI-286642">
        <id>P62826</id>
    </interactant>
    <interactant intactId="EBI-12323557">
        <id>Q9Y303-2</id>
        <label>AMDHD2</label>
    </interactant>
    <organismsDiffer>false</organismsDiffer>
    <experiments>3</experiments>
</comment>
<comment type="interaction">
    <interactant intactId="EBI-286642">
        <id>P62826</id>
    </interactant>
    <interactant intactId="EBI-9381820">
        <id>Q8WVL7</id>
        <label>ANKRD49</label>
    </interactant>
    <organismsDiffer>false</organismsDiffer>
    <experiments>2</experiments>
</comment>
<comment type="interaction">
    <interactant intactId="EBI-286642">
        <id>P62826</id>
    </interactant>
    <interactant intactId="EBI-2556852">
        <id>P09525</id>
        <label>ANXA4</label>
    </interactant>
    <organismsDiffer>false</organismsDiffer>
    <experiments>3</experiments>
</comment>
<comment type="interaction">
    <interactant intactId="EBI-286642">
        <id>P62826</id>
    </interactant>
    <interactant intactId="EBI-25836284">
        <id>Q8WW27</id>
        <label>APOBEC4</label>
    </interactant>
    <organismsDiffer>false</organismsDiffer>
    <experiments>3</experiments>
</comment>
<comment type="interaction">
    <interactant intactId="EBI-286642">
        <id>P62826</id>
    </interactant>
    <interactant intactId="EBI-5280499">
        <id>Q66PJ3-4</id>
        <label>ARL6IP4</label>
    </interactant>
    <organismsDiffer>false</organismsDiffer>
    <experiments>3</experiments>
</comment>
<comment type="interaction">
    <interactant intactId="EBI-286642">
        <id>P62826</id>
    </interactant>
    <interactant intactId="EBI-10254793">
        <id>Q6XD76</id>
        <label>ASCL4</label>
    </interactant>
    <organismsDiffer>false</organismsDiffer>
    <experiments>3</experiments>
</comment>
<comment type="interaction">
    <interactant intactId="EBI-286642">
        <id>P62826</id>
    </interactant>
    <interactant intactId="EBI-1048913">
        <id>Q9H0Y0</id>
        <label>ATG10</label>
    </interactant>
    <organismsDiffer>false</organismsDiffer>
    <experiments>3</experiments>
</comment>
<comment type="interaction">
    <interactant intactId="EBI-286642">
        <id>P62826</id>
    </interactant>
    <interactant intactId="EBI-8994378">
        <id>Q14032</id>
        <label>BAAT</label>
    </interactant>
    <organismsDiffer>false</organismsDiffer>
    <experiments>3</experiments>
</comment>
<comment type="interaction">
    <interactant intactId="EBI-286642">
        <id>P62826</id>
    </interactant>
    <interactant intactId="EBI-7936069">
        <id>P06276</id>
        <label>BCHE</label>
    </interactant>
    <organismsDiffer>false</organismsDiffer>
    <experiments>3</experiments>
</comment>
<comment type="interaction">
    <interactant intactId="EBI-286642">
        <id>P62826</id>
    </interactant>
    <interactant intactId="EBI-518823">
        <id>O15392</id>
        <label>BIRC5</label>
    </interactant>
    <organismsDiffer>false</organismsDiffer>
    <experiments>7</experiments>
</comment>
<comment type="interaction">
    <interactant intactId="EBI-286642">
        <id>P62826</id>
    </interactant>
    <interactant intactId="EBI-10693038">
        <id>Q9NSI6-4</id>
        <label>BRWD1</label>
    </interactant>
    <organismsDiffer>false</organismsDiffer>
    <experiments>3</experiments>
</comment>
<comment type="interaction">
    <interactant intactId="EBI-286642">
        <id>P62826</id>
    </interactant>
    <interactant intactId="EBI-22006737">
        <id>Q96Q07-2</id>
        <label>BTBD9</label>
    </interactant>
    <organismsDiffer>false</organismsDiffer>
    <experiments>3</experiments>
</comment>
<comment type="interaction">
    <interactant intactId="EBI-286642">
        <id>P62826</id>
    </interactant>
    <interactant intactId="EBI-12108466">
        <id>Q9H0W9-3</id>
        <label>C11orf54</label>
    </interactant>
    <organismsDiffer>false</organismsDiffer>
    <experiments>3</experiments>
</comment>
<comment type="interaction">
    <interactant intactId="EBI-286642">
        <id>P62826</id>
    </interactant>
    <interactant intactId="EBI-3844053">
        <id>Q13901</id>
        <label>C1D</label>
    </interactant>
    <organismsDiffer>false</organismsDiffer>
    <experiments>3</experiments>
</comment>
<comment type="interaction">
    <interactant intactId="EBI-286642">
        <id>P62826</id>
    </interactant>
    <interactant intactId="EBI-18036948">
        <id>Q3SXR2</id>
        <label>C3orf36</label>
    </interactant>
    <organismsDiffer>false</organismsDiffer>
    <experiments>3</experiments>
</comment>
<comment type="interaction">
    <interactant intactId="EBI-286642">
        <id>P62826</id>
    </interactant>
    <interactant intactId="EBI-1028956">
        <id>P17655</id>
        <label>CAPN2</label>
    </interactant>
    <organismsDiffer>false</organismsDiffer>
    <experiments>3</experiments>
</comment>
<comment type="interaction">
    <interactant intactId="EBI-286642">
        <id>P62826</id>
    </interactant>
    <interactant intactId="EBI-11532021">
        <id>P20807-4</id>
        <label>CAPN3</label>
    </interactant>
    <organismsDiffer>false</organismsDiffer>
    <experiments>3</experiments>
</comment>
<comment type="interaction">
    <interactant intactId="EBI-286642">
        <id>P62826</id>
    </interactant>
    <interactant intactId="EBI-4392727">
        <id>O00257-3</id>
        <label>CBX4</label>
    </interactant>
    <organismsDiffer>false</organismsDiffer>
    <experiments>3</experiments>
</comment>
<comment type="interaction">
    <interactant intactId="EBI-286642">
        <id>P62826</id>
    </interactant>
    <interactant intactId="EBI-12300031">
        <id>Q9NNX6-10</id>
        <label>CD209</label>
    </interactant>
    <organismsDiffer>false</organismsDiffer>
    <experiments>3</experiments>
</comment>
<comment type="interaction">
    <interactant intactId="EBI-286642">
        <id>P62826</id>
    </interactant>
    <interactant intactId="EBI-3913685">
        <id>O95674</id>
        <label>CDS2</label>
    </interactant>
    <organismsDiffer>false</organismsDiffer>
    <experiments>3</experiments>
</comment>
<comment type="interaction">
    <interactant intactId="EBI-286642">
        <id>P62826</id>
    </interactant>
    <interactant intactId="EBI-11953200">
        <id>Q494V2-2</id>
        <label>CFAP100</label>
    </interactant>
    <organismsDiffer>false</organismsDiffer>
    <experiments>3</experiments>
</comment>
<comment type="interaction">
    <interactant intactId="EBI-286642">
        <id>P62826</id>
    </interactant>
    <interactant intactId="EBI-749253">
        <id>Q8WUX9</id>
        <label>CHMP7</label>
    </interactant>
    <organismsDiffer>false</organismsDiffer>
    <experiments>3</experiments>
</comment>
<comment type="interaction">
    <interactant intactId="EBI-286642">
        <id>P62826</id>
    </interactant>
    <interactant intactId="EBI-744045">
        <id>Q9Y3D0</id>
        <label>CIAO2B</label>
    </interactant>
    <organismsDiffer>false</organismsDiffer>
    <experiments>3</experiments>
</comment>
<comment type="interaction">
    <interactant intactId="EBI-286642">
        <id>P62826</id>
    </interactant>
    <interactant intactId="EBI-6660184">
        <id>Q3SX64</id>
        <label>CIMAP1D</label>
    </interactant>
    <organismsDiffer>false</organismsDiffer>
    <experiments>3</experiments>
</comment>
<comment type="interaction">
    <interactant intactId="EBI-286642">
        <id>P62826</id>
    </interactant>
    <interactant intactId="EBI-25836090">
        <id>Q6PJW8-3</id>
        <label>CNST</label>
    </interactant>
    <organismsDiffer>false</organismsDiffer>
    <experiments>3</experiments>
</comment>
<comment type="interaction">
    <interactant intactId="EBI-286642">
        <id>P62826</id>
    </interactant>
    <interactant intactId="EBI-6269632">
        <id>Q96BR5</id>
        <label>COA7</label>
    </interactant>
    <organismsDiffer>false</organismsDiffer>
    <experiments>3</experiments>
</comment>
<comment type="interaction">
    <interactant intactId="EBI-286642">
        <id>P62826</id>
    </interactant>
    <interactant intactId="EBI-713677">
        <id>Q9UGL9</id>
        <label>CRCT1</label>
    </interactant>
    <organismsDiffer>false</organismsDiffer>
    <experiments>3</experiments>
</comment>
<comment type="interaction">
    <interactant intactId="EBI-286642">
        <id>P62826</id>
    </interactant>
    <interactant intactId="EBI-25835363">
        <id>Q9UKG9-2</id>
        <label>CROT</label>
    </interactant>
    <organismsDiffer>false</organismsDiffer>
    <experiments>3</experiments>
</comment>
<comment type="interaction">
    <interactant intactId="EBI-286642">
        <id>P62826</id>
    </interactant>
    <interactant intactId="EBI-491549">
        <id>P35222</id>
        <label>CTNNB1</label>
    </interactant>
    <organismsDiffer>false</organismsDiffer>
    <experiments>3</experiments>
</comment>
<comment type="interaction">
    <interactant intactId="EBI-286642">
        <id>P62826</id>
    </interactant>
    <interactant intactId="EBI-25868628">
        <id>Q9H2U1-3</id>
        <label>DHX36</label>
    </interactant>
    <organismsDiffer>false</organismsDiffer>
    <experiments>3</experiments>
</comment>
<comment type="interaction">
    <interactant intactId="EBI-286642">
        <id>P62826</id>
    </interactant>
    <interactant intactId="EBI-11526226">
        <id>Q96EY1-3</id>
        <label>DNAJA3</label>
    </interactant>
    <organismsDiffer>false</organismsDiffer>
    <experiments>3</experiments>
</comment>
<comment type="interaction">
    <interactant intactId="EBI-286642">
        <id>P62826</id>
    </interactant>
    <interactant intactId="EBI-23669343">
        <id>Q92782-2</id>
        <label>DPF1</label>
    </interactant>
    <organismsDiffer>false</organismsDiffer>
    <experiments>3</experiments>
</comment>
<comment type="interaction">
    <interactant intactId="EBI-286642">
        <id>P62826</id>
    </interactant>
    <interactant intactId="EBI-724653">
        <id>Q9BPU6</id>
        <label>DPYSL5</label>
    </interactant>
    <organismsDiffer>false</organismsDiffer>
    <experiments>3</experiments>
</comment>
<comment type="interaction">
    <interactant intactId="EBI-286642">
        <id>P62826</id>
    </interactant>
    <interactant intactId="EBI-10248874">
        <id>Q658K8</id>
        <label>EEF1DP3</label>
    </interactant>
    <organismsDiffer>false</organismsDiffer>
    <experiments>3</experiments>
</comment>
<comment type="interaction">
    <interactant intactId="EBI-286642">
        <id>P62826</id>
    </interactant>
    <interactant intactId="EBI-395274">
        <id>O00472</id>
        <label>ELL2</label>
    </interactant>
    <organismsDiffer>false</organismsDiffer>
    <experiments>3</experiments>
</comment>
<comment type="interaction">
    <interactant intactId="EBI-286642">
        <id>P62826</id>
    </interactant>
    <interactant intactId="EBI-25835236">
        <id>Q49AJ0-4</id>
        <label>FAM135B</label>
    </interactant>
    <organismsDiffer>false</organismsDiffer>
    <experiments>3</experiments>
</comment>
<comment type="interaction">
    <interactant intactId="EBI-286642">
        <id>P62826</id>
    </interactant>
    <interactant intactId="EBI-8468186">
        <id>Q8IZU1</id>
        <label>FAM9A</label>
    </interactant>
    <organismsDiffer>false</organismsDiffer>
    <experiments>3</experiments>
</comment>
<comment type="interaction">
    <interactant intactId="EBI-286642">
        <id>P62826</id>
    </interactant>
    <interactant intactId="EBI-7962481">
        <id>Q6ZNL6</id>
        <label>FGD5</label>
    </interactant>
    <organismsDiffer>false</organismsDiffer>
    <experiments>3</experiments>
</comment>
<comment type="interaction">
    <interactant intactId="EBI-286642">
        <id>P62826</id>
    </interactant>
    <interactant intactId="EBI-515315">
        <id>P06241</id>
        <label>FYN</label>
    </interactant>
    <organismsDiffer>false</organismsDiffer>
    <experiments>3</experiments>
</comment>
<comment type="interaction">
    <interactant intactId="EBI-286642">
        <id>P62826</id>
    </interactant>
    <interactant intactId="EBI-9088619">
        <id>Q06547-3</id>
        <label>GABPB1</label>
    </interactant>
    <organismsDiffer>false</organismsDiffer>
    <experiments>3</experiments>
</comment>
<comment type="interaction">
    <interactant intactId="EBI-286642">
        <id>P62826</id>
    </interactant>
    <interactant intactId="EBI-12143817">
        <id>Q49A26-4</id>
        <label>GLYR1</label>
    </interactant>
    <organismsDiffer>false</organismsDiffer>
    <experiments>3</experiments>
</comment>
<comment type="interaction">
    <interactant intactId="EBI-286642">
        <id>P62826</id>
    </interactant>
    <interactant intactId="EBI-2868501">
        <id>Q6NXT2</id>
        <label>H3-5</label>
    </interactant>
    <organismsDiffer>false</organismsDiffer>
    <experiments>3</experiments>
</comment>
<comment type="interaction">
    <interactant intactId="EBI-286642">
        <id>P62826</id>
    </interactant>
    <interactant intactId="EBI-302023">
        <id>P62805</id>
        <label>H4C9</label>
    </interactant>
    <organismsDiffer>false</organismsDiffer>
    <experiments>2</experiments>
</comment>
<comment type="interaction">
    <interactant intactId="EBI-286642">
        <id>P62826</id>
    </interactant>
    <interactant intactId="EBI-2558143">
        <id>Q9BT25</id>
        <label>HAUS8</label>
    </interactant>
    <organismsDiffer>false</organismsDiffer>
    <experiments>3</experiments>
</comment>
<comment type="interaction">
    <interactant intactId="EBI-286642">
        <id>P62826</id>
    </interactant>
    <interactant intactId="EBI-12003732">
        <id>Q9NRZ9-6</id>
        <label>HELLS</label>
    </interactant>
    <organismsDiffer>false</organismsDiffer>
    <experiments>3</experiments>
</comment>
<comment type="interaction">
    <interactant intactId="EBI-286642">
        <id>P62826</id>
    </interactant>
    <interactant intactId="EBI-466029">
        <id>P42858</id>
        <label>HTT</label>
    </interactant>
    <organismsDiffer>false</organismsDiffer>
    <experiments>6</experiments>
</comment>
<comment type="interaction">
    <interactant intactId="EBI-286642">
        <id>P62826</id>
    </interactant>
    <interactant intactId="EBI-747310">
        <id>O94829</id>
        <label>IPO13</label>
    </interactant>
    <organismsDiffer>false</organismsDiffer>
    <experiments>13</experiments>
</comment>
<comment type="interaction">
    <interactant intactId="EBI-286642">
        <id>P62826</id>
    </interactant>
    <interactant intactId="EBI-9090173">
        <id>P0C870</id>
        <label>JMJD7</label>
    </interactant>
    <organismsDiffer>false</organismsDiffer>
    <experiments>3</experiments>
</comment>
<comment type="interaction">
    <interactant intactId="EBI-286642">
        <id>P62826</id>
    </interactant>
    <interactant intactId="EBI-720411">
        <id>Q9UK76</id>
        <label>JPT1</label>
    </interactant>
    <organismsDiffer>false</organismsDiffer>
    <experiments>3</experiments>
</comment>
<comment type="interaction">
    <interactant intactId="EBI-286642">
        <id>P62826</id>
    </interactant>
    <interactant intactId="EBI-743960">
        <id>Q8N5Z5</id>
        <label>KCTD17</label>
    </interactant>
    <organismsDiffer>false</organismsDiffer>
    <experiments>3</experiments>
</comment>
<comment type="interaction">
    <interactant intactId="EBI-286642">
        <id>P62826</id>
    </interactant>
    <interactant intactId="EBI-21838933">
        <id>Q8TBB5-2</id>
        <label>KLHDC4</label>
    </interactant>
    <organismsDiffer>false</organismsDiffer>
    <experiments>3</experiments>
</comment>
<comment type="interaction">
    <interactant intactId="EBI-286642">
        <id>P62826</id>
    </interactant>
    <interactant intactId="EBI-8473062">
        <id>Q8N1A0</id>
        <label>KRT222</label>
    </interactant>
    <organismsDiffer>false</organismsDiffer>
    <experiments>3</experiments>
</comment>
<comment type="interaction">
    <interactant intactId="EBI-286642">
        <id>P62826</id>
    </interactant>
    <interactant intactId="EBI-25835523">
        <id>Q9H2C1</id>
        <label>LHX5</label>
    </interactant>
    <organismsDiffer>false</organismsDiffer>
    <experiments>3</experiments>
</comment>
<comment type="interaction">
    <interactant intactId="EBI-286642">
        <id>P62826</id>
    </interactant>
    <interactant intactId="EBI-10264791">
        <id>Q8N0U6</id>
        <label>LINC00518</label>
    </interactant>
    <organismsDiffer>false</organismsDiffer>
    <experiments>3</experiments>
</comment>
<comment type="interaction">
    <interactant intactId="EBI-286642">
        <id>P62826</id>
    </interactant>
    <interactant intactId="EBI-10238012">
        <id>Q16609</id>
        <label>LPAL2</label>
    </interactant>
    <organismsDiffer>false</organismsDiffer>
    <experiments>3</experiments>
</comment>
<comment type="interaction">
    <interactant intactId="EBI-286642">
        <id>P62826</id>
    </interactant>
    <interactant intactId="EBI-14752528">
        <id>Q8IYG6</id>
        <label>LRRC56</label>
    </interactant>
    <organismsDiffer>false</organismsDiffer>
    <experiments>3</experiments>
</comment>
<comment type="interaction">
    <interactant intactId="EBI-286642">
        <id>P62826</id>
    </interactant>
    <interactant intactId="EBI-3911344">
        <id>P27338</id>
        <label>MAOB</label>
    </interactant>
    <organismsDiffer>false</organismsDiffer>
    <experiments>3</experiments>
</comment>
<comment type="interaction">
    <interactant intactId="EBI-286642">
        <id>P62826</id>
    </interactant>
    <interactant intactId="EBI-10174029">
        <id>A6NJ78-4</id>
        <label>METTL15</label>
    </interactant>
    <organismsDiffer>false</organismsDiffer>
    <experiments>3</experiments>
</comment>
<comment type="interaction">
    <interactant intactId="EBI-286642">
        <id>P62826</id>
    </interactant>
    <interactant intactId="EBI-25835557">
        <id>A0A0A0MR05</id>
        <label>MLST8</label>
    </interactant>
    <organismsDiffer>false</organismsDiffer>
    <experiments>3</experiments>
</comment>
<comment type="interaction">
    <interactant intactId="EBI-286642">
        <id>P62826</id>
    </interactant>
    <interactant intactId="EBI-25835707">
        <id>Q6IN84-2</id>
        <label>MRM1</label>
    </interactant>
    <organismsDiffer>false</organismsDiffer>
    <experiments>3</experiments>
</comment>
<comment type="interaction">
    <interactant intactId="EBI-286642">
        <id>P62826</id>
    </interactant>
    <interactant intactId="EBI-9088235">
        <id>A2RUH7</id>
        <label>MYBPHL</label>
    </interactant>
    <organismsDiffer>false</organismsDiffer>
    <experiments>3</experiments>
</comment>
<comment type="interaction">
    <interactant intactId="EBI-286642">
        <id>P62826</id>
    </interactant>
    <interactant intactId="EBI-25834643">
        <id>P36639-4</id>
        <label>NUDT1</label>
    </interactant>
    <organismsDiffer>false</organismsDiffer>
    <experiments>3</experiments>
</comment>
<comment type="interaction">
    <interactant intactId="EBI-286642">
        <id>P62826</id>
    </interactant>
    <interactant intactId="EBI-741048">
        <id>Q7Z3B4</id>
        <label>NUP54</label>
    </interactant>
    <organismsDiffer>false</organismsDiffer>
    <experiments>4</experiments>
</comment>
<comment type="interaction">
    <interactant intactId="EBI-286642">
        <id>P62826</id>
    </interactant>
    <interactant intactId="EBI-591778">
        <id>P61970</id>
        <label>NUTF2</label>
    </interactant>
    <organismsDiffer>false</organismsDiffer>
    <experiments>9</experiments>
</comment>
<comment type="interaction">
    <interactant intactId="EBI-286642">
        <id>P62826</id>
    </interactant>
    <interactant intactId="EBI-22006224">
        <id>Q6N063-2</id>
        <label>OGFOD2</label>
    </interactant>
    <organismsDiffer>false</organismsDiffer>
    <experiments>3</experiments>
</comment>
<comment type="interaction">
    <interactant intactId="EBI-286642">
        <id>P62826</id>
    </interactant>
    <interactant intactId="EBI-25830200">
        <id>Q6GQQ9-2</id>
        <label>OTUD7B</label>
    </interactant>
    <organismsDiffer>false</organismsDiffer>
    <experiments>3</experiments>
</comment>
<comment type="interaction">
    <interactant intactId="EBI-286642">
        <id>P62826</id>
    </interactant>
    <interactant intactId="EBI-714785">
        <id>Q9H8K7</id>
        <label>PAAT</label>
    </interactant>
    <organismsDiffer>false</organismsDiffer>
    <experiments>3</experiments>
</comment>
<comment type="interaction">
    <interactant intactId="EBI-286642">
        <id>P62826</id>
    </interactant>
    <interactant intactId="EBI-2557276">
        <id>O15534</id>
        <label>PER1</label>
    </interactant>
    <organismsDiffer>false</organismsDiffer>
    <experiments>3</experiments>
</comment>
<comment type="interaction">
    <interactant intactId="EBI-286642">
        <id>P62826</id>
    </interactant>
    <interactant intactId="EBI-722852">
        <id>Q9BUL5</id>
        <label>PHF23</label>
    </interactant>
    <organismsDiffer>false</organismsDiffer>
    <experiments>3</experiments>
</comment>
<comment type="interaction">
    <interactant intactId="EBI-286642">
        <id>P62826</id>
    </interactant>
    <interactant intactId="EBI-712752">
        <id>Q14181</id>
        <label>POLA2</label>
    </interactant>
    <organismsDiffer>false</organismsDiffer>
    <experiments>3</experiments>
</comment>
<comment type="interaction">
    <interactant intactId="EBI-286642">
        <id>P62826</id>
    </interactant>
    <interactant intactId="EBI-359498">
        <id>P0DPB6</id>
        <label>POLR1D</label>
    </interactant>
    <organismsDiffer>false</organismsDiffer>
    <experiments>3</experiments>
</comment>
<comment type="interaction">
    <interactant intactId="EBI-286642">
        <id>P62826</id>
    </interactant>
    <interactant intactId="EBI-395202">
        <id>P36954</id>
        <label>POLR2I</label>
    </interactant>
    <organismsDiffer>false</organismsDiffer>
    <experiments>3</experiments>
</comment>
<comment type="interaction">
    <interactant intactId="EBI-286642">
        <id>P62826</id>
    </interactant>
    <interactant intactId="EBI-78615">
        <id>Q07869</id>
        <label>PPARA</label>
    </interactant>
    <organismsDiffer>false</organismsDiffer>
    <experiments>3</experiments>
</comment>
<comment type="interaction">
    <interactant intactId="EBI-286642">
        <id>P62826</id>
    </interactant>
    <interactant intactId="EBI-1048104">
        <id>O60927</id>
        <label>PPP1R11</label>
    </interactant>
    <organismsDiffer>false</organismsDiffer>
    <experiments>3</experiments>
</comment>
<comment type="interaction">
    <interactant intactId="EBI-286642">
        <id>P62826</id>
    </interactant>
    <interactant intactId="EBI-5550163">
        <id>Q8WUF5</id>
        <label>PPP1R13L</label>
    </interactant>
    <organismsDiffer>false</organismsDiffer>
    <experiments>9</experiments>
</comment>
<comment type="interaction">
    <interactant intactId="EBI-286642">
        <id>P62826</id>
    </interactant>
    <interactant intactId="EBI-25835994">
        <id>Q6ZMI0-5</id>
        <label>PPP1R21</label>
    </interactant>
    <organismsDiffer>false</organismsDiffer>
    <experiments>3</experiments>
</comment>
<comment type="interaction">
    <interactant intactId="EBI-286642">
        <id>P62826</id>
    </interactant>
    <interactant intactId="EBI-25835884">
        <id>Q8WUD1-2</id>
        <label>RAB2B</label>
    </interactant>
    <organismsDiffer>false</organismsDiffer>
    <experiments>3</experiments>
</comment>
<comment type="interaction">
    <interactant intactId="EBI-286642">
        <id>P62826</id>
    </interactant>
    <interactant intactId="EBI-973138">
        <id>P49792</id>
        <label>RANBP2</label>
    </interactant>
    <organismsDiffer>false</organismsDiffer>
    <experiments>7</experiments>
</comment>
<comment type="interaction">
    <interactant intactId="EBI-286642">
        <id>P62826</id>
    </interactant>
    <interactant intactId="EBI-9089733">
        <id>Q9HD47-3</id>
        <label>RANGRF</label>
    </interactant>
    <organismsDiffer>false</organismsDiffer>
    <experiments>3</experiments>
</comment>
<comment type="interaction">
    <interactant intactId="EBI-286642">
        <id>P62826</id>
    </interactant>
    <interactant intactId="EBI-620823">
        <id>Q09028</id>
        <label>RBBP4</label>
    </interactant>
    <organismsDiffer>false</organismsDiffer>
    <experiments>3</experiments>
</comment>
<comment type="interaction">
    <interactant intactId="EBI-286642">
        <id>P62826</id>
    </interactant>
    <interactant intactId="EBI-992720">
        <id>P18754</id>
        <label>RCC1</label>
    </interactant>
    <organismsDiffer>false</organismsDiffer>
    <experiments>19</experiments>
</comment>
<comment type="interaction">
    <interactant intactId="EBI-286642">
        <id>P62826</id>
    </interactant>
    <interactant intactId="EBI-73886">
        <id>Q04206</id>
        <label>RELA</label>
    </interactant>
    <organismsDiffer>false</organismsDiffer>
    <experiments>3</experiments>
</comment>
<comment type="interaction">
    <interactant intactId="EBI-286642">
        <id>P62826</id>
    </interactant>
    <interactant intactId="EBI-2511609">
        <id>Q99666</id>
        <label>RGPD6</label>
    </interactant>
    <organismsDiffer>false</organismsDiffer>
    <experiments>4</experiments>
</comment>
<comment type="interaction">
    <interactant intactId="EBI-286642">
        <id>P62826</id>
    </interactant>
    <interactant intactId="EBI-25834767">
        <id>P47804-3</id>
        <label>RGR</label>
    </interactant>
    <organismsDiffer>false</organismsDiffer>
    <experiments>3</experiments>
</comment>
<comment type="interaction">
    <interactant intactId="EBI-286642">
        <id>P62826</id>
    </interactant>
    <interactant intactId="EBI-1055287">
        <id>Q15382</id>
        <label>RHEB</label>
    </interactant>
    <organismsDiffer>false</organismsDiffer>
    <experiments>3</experiments>
</comment>
<comment type="interaction">
    <interactant intactId="EBI-286642">
        <id>P62826</id>
    </interactant>
    <interactant intactId="EBI-714023">
        <id>Q8N5U6</id>
        <label>RNF10</label>
    </interactant>
    <organismsDiffer>false</organismsDiffer>
    <experiments>3</experiments>
</comment>
<comment type="interaction">
    <interactant intactId="EBI-286642">
        <id>P62826</id>
    </interactant>
    <interactant intactId="EBI-354303">
        <id>P62701</id>
        <label>RPS4X</label>
    </interactant>
    <organismsDiffer>false</organismsDiffer>
    <experiments>3</experiments>
</comment>
<comment type="interaction">
    <interactant intactId="EBI-286642">
        <id>P62826</id>
    </interactant>
    <interactant intactId="EBI-712189">
        <id>Q96IZ7</id>
        <label>RSRC1</label>
    </interactant>
    <organismsDiffer>false</organismsDiffer>
    <experiments>3</experiments>
</comment>
<comment type="interaction">
    <interactant intactId="EBI-286642">
        <id>P62826</id>
    </interactant>
    <interactant intactId="EBI-10248967">
        <id>Q66K80</id>
        <label>RUSC1-AS1</label>
    </interactant>
    <organismsDiffer>false</organismsDiffer>
    <experiments>3</experiments>
</comment>
<comment type="interaction">
    <interactant intactId="EBI-286642">
        <id>P62826</id>
    </interactant>
    <interactant intactId="EBI-25834804">
        <id>P22307-3</id>
        <label>SCP2</label>
    </interactant>
    <organismsDiffer>false</organismsDiffer>
    <experiments>3</experiments>
</comment>
<comment type="interaction">
    <interactant intactId="EBI-286642">
        <id>P62826</id>
    </interactant>
    <interactant intactId="EBI-9089805">
        <id>Q9NTN9-3</id>
        <label>SEMA4G</label>
    </interactant>
    <organismsDiffer>false</organismsDiffer>
    <experiments>3</experiments>
</comment>
<comment type="interaction">
    <interactant intactId="EBI-286642">
        <id>P62826</id>
    </interactant>
    <interactant intactId="EBI-2822550">
        <id>Q8IYM2</id>
        <label>SLFN12</label>
    </interactant>
    <organismsDiffer>false</organismsDiffer>
    <experiments>3</experiments>
</comment>
<comment type="interaction">
    <interactant intactId="EBI-286642">
        <id>P62826</id>
    </interactant>
    <interactant intactId="EBI-3232100">
        <id>Q86US8</id>
        <label>SMG6</label>
    </interactant>
    <organismsDiffer>false</organismsDiffer>
    <experiments>3</experiments>
</comment>
<comment type="interaction">
    <interactant intactId="EBI-286642">
        <id>P62826</id>
    </interactant>
    <interactant intactId="EBI-985879">
        <id>P37840</id>
        <label>SNCA</label>
    </interactant>
    <organismsDiffer>false</organismsDiffer>
    <experiments>3</experiments>
</comment>
<comment type="interaction">
    <interactant intactId="EBI-286642">
        <id>P62826</id>
    </interactant>
    <interactant intactId="EBI-747719">
        <id>Q96H20</id>
        <label>SNF8</label>
    </interactant>
    <organismsDiffer>false</organismsDiffer>
    <experiments>3</experiments>
</comment>
<comment type="interaction">
    <interactant intactId="EBI-286642">
        <id>P62826</id>
    </interactant>
    <interactant intactId="EBI-632715">
        <id>Q13573</id>
        <label>SNW1</label>
    </interactant>
    <organismsDiffer>false</organismsDiffer>
    <experiments>3</experiments>
</comment>
<comment type="interaction">
    <interactant intactId="EBI-286642">
        <id>P62826</id>
    </interactant>
    <interactant intactId="EBI-3923692">
        <id>Q496A3</id>
        <label>SPATS1</label>
    </interactant>
    <organismsDiffer>false</organismsDiffer>
    <experiments>3</experiments>
</comment>
<comment type="interaction">
    <interactant intactId="EBI-286642">
        <id>P62826</id>
    </interactant>
    <interactant intactId="EBI-5235340">
        <id>Q7Z699</id>
        <label>SPRED1</label>
    </interactant>
    <organismsDiffer>false</organismsDiffer>
    <experiments>3</experiments>
</comment>
<comment type="interaction">
    <interactant intactId="EBI-286642">
        <id>P62826</id>
    </interactant>
    <interactant intactId="EBI-354861">
        <id>Q9C004</id>
        <label>SPRY4</label>
    </interactant>
    <organismsDiffer>false</organismsDiffer>
    <experiments>3</experiments>
</comment>
<comment type="interaction">
    <interactant intactId="EBI-286642">
        <id>P62826</id>
    </interactant>
    <interactant intactId="EBI-12408727">
        <id>Q5W111-2</id>
        <label>SPRYD7</label>
    </interactant>
    <organismsDiffer>false</organismsDiffer>
    <experiments>3</experiments>
</comment>
<comment type="interaction">
    <interactant intactId="EBI-286642">
        <id>P62826</id>
    </interactant>
    <interactant intactId="EBI-2659201">
        <id>Q96BD6</id>
        <label>SPSB1</label>
    </interactant>
    <organismsDiffer>false</organismsDiffer>
    <experiments>3</experiments>
</comment>
<comment type="interaction">
    <interactant intactId="EBI-286642">
        <id>P62826</id>
    </interactant>
    <interactant intactId="EBI-21560407">
        <id>Q92797-2</id>
        <label>SYMPK</label>
    </interactant>
    <organismsDiffer>false</organismsDiffer>
    <experiments>3</experiments>
</comment>
<comment type="interaction">
    <interactant intactId="EBI-286642">
        <id>P62826</id>
    </interactant>
    <interactant intactId="EBI-11123832">
        <id>O60506-4</id>
        <label>SYNCRIP</label>
    </interactant>
    <organismsDiffer>false</organismsDiffer>
    <experiments>3</experiments>
</comment>
<comment type="interaction">
    <interactant intactId="EBI-286642">
        <id>P62826</id>
    </interactant>
    <interactant intactId="EBI-954089">
        <id>O15273</id>
        <label>TCAP</label>
    </interactant>
    <organismsDiffer>false</organismsDiffer>
    <experiments>3</experiments>
</comment>
<comment type="interaction">
    <interactant intactId="EBI-286642">
        <id>P62826</id>
    </interactant>
    <interactant intactId="EBI-2562799">
        <id>Q86WV5</id>
        <label>TEN1</label>
    </interactant>
    <organismsDiffer>false</organismsDiffer>
    <experiments>3</experiments>
</comment>
<comment type="interaction">
    <interactant intactId="EBI-286642">
        <id>P62826</id>
    </interactant>
    <interactant intactId="EBI-752030">
        <id>Q96A09</id>
        <label>TENT5B</label>
    </interactant>
    <organismsDiffer>false</organismsDiffer>
    <experiments>3</experiments>
</comment>
<comment type="interaction">
    <interactant intactId="EBI-286642">
        <id>P62826</id>
    </interactant>
    <interactant intactId="EBI-711018">
        <id>P54274-2</id>
        <label>TERF1</label>
    </interactant>
    <organismsDiffer>false</organismsDiffer>
    <experiments>3</experiments>
</comment>
<comment type="interaction">
    <interactant intactId="EBI-286642">
        <id>P62826</id>
    </interactant>
    <interactant intactId="EBI-25835153">
        <id>Q9UIK5-2</id>
        <label>TMEFF2</label>
    </interactant>
    <organismsDiffer>false</organismsDiffer>
    <experiments>3</experiments>
</comment>
<comment type="interaction">
    <interactant intactId="EBI-286642">
        <id>P62826</id>
    </interactant>
    <interactant intactId="EBI-10242677">
        <id>Q53NU3</id>
        <label>tmp_locus_54</label>
    </interactant>
    <organismsDiffer>false</organismsDiffer>
    <experiments>3</experiments>
</comment>
<comment type="interaction">
    <interactant intactId="EBI-286642">
        <id>P62826</id>
    </interactant>
    <interactant intactId="EBI-286693">
        <id>Q92973</id>
        <label>TNPO1</label>
    </interactant>
    <organismsDiffer>false</organismsDiffer>
    <experiments>2</experiments>
</comment>
<comment type="interaction">
    <interactant intactId="EBI-286642">
        <id>P62826</id>
    </interactant>
    <interactant intactId="EBI-12076664">
        <id>O14787-2</id>
        <label>TNPO2</label>
    </interactant>
    <organismsDiffer>false</organismsDiffer>
    <experiments>3</experiments>
</comment>
<comment type="interaction">
    <interactant intactId="EBI-286642">
        <id>P62826</id>
    </interactant>
    <interactant intactId="EBI-396540">
        <id>Q12888</id>
        <label>TP53BP1</label>
    </interactant>
    <organismsDiffer>false</organismsDiffer>
    <experiments>3</experiments>
</comment>
<comment type="interaction">
    <interactant intactId="EBI-286642">
        <id>P62826</id>
    </interactant>
    <interactant intactId="EBI-77642">
        <id>Q13625</id>
        <label>TP53BP2</label>
    </interactant>
    <organismsDiffer>false</organismsDiffer>
    <experiments>5</experiments>
</comment>
<comment type="interaction">
    <interactant intactId="EBI-286642">
        <id>P62826</id>
    </interactant>
    <interactant intactId="EBI-740098">
        <id>P36406</id>
        <label>TRIM23</label>
    </interactant>
    <organismsDiffer>false</organismsDiffer>
    <experiments>3</experiments>
</comment>
<comment type="interaction">
    <interactant intactId="EBI-286642">
        <id>P62826</id>
    </interactant>
    <interactant intactId="EBI-11525489">
        <id>Q86WT6-2</id>
        <label>TRIM69</label>
    </interactant>
    <organismsDiffer>false</organismsDiffer>
    <experiments>3</experiments>
</comment>
<comment type="interaction">
    <interactant intactId="EBI-286642">
        <id>P62826</id>
    </interactant>
    <interactant intactId="EBI-2339348">
        <id>P49459</id>
        <label>UBE2A</label>
    </interactant>
    <organismsDiffer>false</organismsDiffer>
    <experiments>3</experiments>
</comment>
<comment type="interaction">
    <interactant intactId="EBI-286642">
        <id>P62826</id>
    </interactant>
    <interactant intactId="EBI-714860">
        <id>P09936</id>
        <label>UCHL1</label>
    </interactant>
    <organismsDiffer>false</organismsDiffer>
    <experiments>3</experiments>
</comment>
<comment type="interaction">
    <interactant intactId="EBI-286642">
        <id>P62826</id>
    </interactant>
    <interactant intactId="EBI-25835297">
        <id>Q9P1Q0-4</id>
        <label>VPS54</label>
    </interactant>
    <organismsDiffer>false</organismsDiffer>
    <experiments>3</experiments>
</comment>
<comment type="interaction">
    <interactant intactId="EBI-286642">
        <id>P62826</id>
    </interactant>
    <interactant intactId="EBI-1769146">
        <id>Q99986</id>
        <label>VRK1</label>
    </interactant>
    <organismsDiffer>false</organismsDiffer>
    <experiments>12</experiments>
</comment>
<comment type="interaction">
    <interactant intactId="EBI-286642">
        <id>P62826</id>
    </interactant>
    <interactant intactId="EBI-1207633">
        <id>Q86Y07-1</id>
        <label>VRK2</label>
    </interactant>
    <organismsDiffer>false</organismsDiffer>
    <experiments>2</experiments>
</comment>
<comment type="interaction">
    <interactant intactId="EBI-286642">
        <id>P62826</id>
    </interactant>
    <interactant intactId="EBI-1207649">
        <id>Q86Y07-5</id>
        <label>VRK2</label>
    </interactant>
    <organismsDiffer>false</organismsDiffer>
    <experiments>2</experiments>
</comment>
<comment type="interaction">
    <interactant intactId="EBI-286642">
        <id>P62826</id>
    </interactant>
    <interactant intactId="EBI-10316321">
        <id>Q9NX94</id>
        <label>WBP1L</label>
    </interactant>
    <organismsDiffer>false</organismsDiffer>
    <experiments>3</experiments>
</comment>
<comment type="interaction">
    <interactant intactId="EBI-286642">
        <id>P62826</id>
    </interactant>
    <interactant intactId="EBI-1237307">
        <id>Q9BQA1</id>
        <label>WDR77</label>
    </interactant>
    <organismsDiffer>false</organismsDiffer>
    <experiments>3</experiments>
</comment>
<comment type="interaction">
    <interactant intactId="EBI-286642">
        <id>P62826</id>
    </interactant>
    <interactant intactId="EBI-286668">
        <id>Q9UIA9</id>
        <label>XPO7</label>
    </interactant>
    <organismsDiffer>false</organismsDiffer>
    <experiments>3</experiments>
</comment>
<comment type="interaction">
    <interactant intactId="EBI-286642">
        <id>P62826</id>
    </interactant>
    <interactant intactId="EBI-286683">
        <id>O43592</id>
        <label>XPOT</label>
    </interactant>
    <organismsDiffer>false</organismsDiffer>
    <experiments>3</experiments>
</comment>
<comment type="interaction">
    <interactant intactId="EBI-286642">
        <id>P62826</id>
    </interactant>
    <interactant intactId="EBI-2799703">
        <id>O95070</id>
        <label>YIF1A</label>
    </interactant>
    <organismsDiffer>false</organismsDiffer>
    <experiments>3</experiments>
</comment>
<comment type="interaction">
    <interactant intactId="EBI-286642">
        <id>P62826</id>
    </interactant>
    <interactant intactId="EBI-10176632">
        <id>O43829</id>
        <label>ZBTB14</label>
    </interactant>
    <organismsDiffer>false</organismsDiffer>
    <experiments>3</experiments>
</comment>
<comment type="interaction">
    <interactant intactId="EBI-286642">
        <id>P62826</id>
    </interactant>
    <interactant intactId="EBI-12956041">
        <id>Q8IWT0-2</id>
        <label>ZBTB8OS</label>
    </interactant>
    <organismsDiffer>false</organismsDiffer>
    <experiments>3</experiments>
</comment>
<comment type="interaction">
    <interactant intactId="EBI-286642">
        <id>P62826</id>
    </interactant>
    <interactant intactId="EBI-14104088">
        <id>Q53FD0-2</id>
        <label>ZC2HC1C</label>
    </interactant>
    <organismsDiffer>false</organismsDiffer>
    <experiments>3</experiments>
</comment>
<comment type="interaction">
    <interactant intactId="EBI-286642">
        <id>P62826</id>
    </interactant>
    <interactant intactId="EBI-25835471">
        <id>Q05CR2</id>
        <label>ZNF248</label>
    </interactant>
    <organismsDiffer>false</organismsDiffer>
    <experiments>3</experiments>
</comment>
<comment type="interaction">
    <interactant intactId="EBI-286642">
        <id>P62826</id>
    </interactant>
    <interactant intactId="EBI-9091553">
        <id>Q96LX8</id>
        <label>ZNF597</label>
    </interactant>
    <organismsDiffer>false</organismsDiffer>
    <experiments>3</experiments>
</comment>
<comment type="interaction">
    <interactant intactId="EBI-286642">
        <id>P62826</id>
    </interactant>
    <interactant intactId="EBI-18036029">
        <id>Q3KNS6-3</id>
        <label>ZNF829</label>
    </interactant>
    <organismsDiffer>false</organismsDiffer>
    <experiments>3</experiments>
</comment>
<comment type="interaction">
    <interactant intactId="EBI-286642">
        <id>P62826</id>
    </interactant>
    <interactant intactId="EBI-723434">
        <id>Q5JTY5</id>
        <label>ZNG1C</label>
    </interactant>
    <organismsDiffer>false</organismsDiffer>
    <experiments>3</experiments>
</comment>
<comment type="interaction">
    <interactant intactId="EBI-286642">
        <id>P62826</id>
    </interactant>
    <interactant intactId="EBI-25834468">
        <id>A0A384MDV8</id>
    </interactant>
    <organismsDiffer>false</organismsDiffer>
    <experiments>3</experiments>
</comment>
<comment type="interaction">
    <interactant intactId="EBI-286642">
        <id>P62826</id>
    </interactant>
    <interactant intactId="EBI-25831617">
        <id>B7Z3E8</id>
    </interactant>
    <organismsDiffer>false</organismsDiffer>
    <experiments>3</experiments>
</comment>
<comment type="interaction">
    <interactant intactId="EBI-286642">
        <id>P62826</id>
    </interactant>
    <interactant intactId="EBI-10259496">
        <id>Q86V28</id>
    </interactant>
    <organismsDiffer>false</organismsDiffer>
    <experiments>3</experiments>
</comment>
<comment type="interaction">
    <interactant intactId="EBI-286642">
        <id>P62826</id>
    </interactant>
    <interactant intactId="EBI-6140533">
        <id>P49791</id>
        <label>Nup153</label>
    </interactant>
    <organismsDiffer>true</organismsDiffer>
    <experiments>5</experiments>
</comment>
<comment type="interaction">
    <interactant intactId="EBI-286642">
        <id>P62826</id>
    </interactant>
    <interactant intactId="EBI-2550236">
        <id>Q6P5F9</id>
        <label>Xpo1</label>
    </interactant>
    <organismsDiffer>true</organismsDiffer>
    <experiments>3</experiments>
</comment>
<comment type="subcellular location">
    <subcellularLocation>
        <location evidence="10 15 26 29 30 44 49 52 54 56">Nucleus</location>
    </subcellularLocation>
    <subcellularLocation>
        <location evidence="52 56">Nucleus envelope</location>
    </subcellularLocation>
    <subcellularLocation>
        <location evidence="26 48">Cytoplasm</location>
        <location evidence="26 48">Cytosol</location>
    </subcellularLocation>
    <subcellularLocation>
        <location evidence="10 15 56">Cytoplasm</location>
    </subcellularLocation>
    <subcellularLocation>
        <location evidence="22">Melanosome</location>
    </subcellularLocation>
    <text evidence="10 15 22 49">Predominantly nuclear during interphase (PubMed:10679025, PubMed:12194828, PubMed:8421051). Becomes dispersed throughout the cytoplasm during mitosis (PubMed:12194828, PubMed:8421051). Identified by mass spectrometry in melanosome fractions from stage I to stage IV (PubMed:17081065).</text>
</comment>
<comment type="tissue specificity">
    <text evidence="32">Expressed in a variety of tissues.</text>
</comment>
<comment type="PTM">
    <text evidence="42 44">Acetylation by KAT5 at Lys-134 is increased during mitosis, impairs RANGRF binding and enhances RCC1 binding (PubMed:29040603). Acetylation at Lys-37 enhances the association with nuclear export components (PubMed:31075303). Deacetylation of Lys-37 by SIRT7 regulates the nuclear export of NF-kappa-B subunit RELA/p65 (PubMed:31075303).</text>
</comment>
<comment type="similarity">
    <text evidence="3 63">Belongs to the small GTPase superfamily. Ran family.</text>
</comment>
<comment type="sequence caution" evidence="63">
    <conflict type="erroneous initiation">
        <sequence resource="EMBL-CDS" id="BAB93486"/>
    </conflict>
    <text>Truncated N-terminus.</text>
</comment>
<gene>
    <name type="primary">RAN</name>
    <name evidence="59" type="synonym">ARA24</name>
    <name type="ORF">OK/SW-cl.81</name>
</gene>
<proteinExistence type="evidence at protein level"/>
<organism>
    <name type="scientific">Homo sapiens</name>
    <name type="common">Human</name>
    <dbReference type="NCBI Taxonomy" id="9606"/>
    <lineage>
        <taxon>Eukaryota</taxon>
        <taxon>Metazoa</taxon>
        <taxon>Chordata</taxon>
        <taxon>Craniata</taxon>
        <taxon>Vertebrata</taxon>
        <taxon>Euteleostomi</taxon>
        <taxon>Mammalia</taxon>
        <taxon>Eutheria</taxon>
        <taxon>Euarchontoglires</taxon>
        <taxon>Primates</taxon>
        <taxon>Haplorrhini</taxon>
        <taxon>Catarrhini</taxon>
        <taxon>Hominidae</taxon>
        <taxon>Homo</taxon>
    </lineage>
</organism>